<reference key="1">
    <citation type="journal article" date="1995" name="J. Biol. Chem.">
        <title>Nup358, a cytoplasmically exposed nucleoporin with peptide repeats, Ran-GTP binding sites, zinc fingers, a cyclophilin A homologous domain, and a leucine-rich region.</title>
        <authorList>
            <person name="Wu J."/>
            <person name="Matunis M.J."/>
            <person name="Kraemer D."/>
            <person name="Blobel G."/>
            <person name="Coutavas E."/>
        </authorList>
    </citation>
    <scope>NUCLEOTIDE SEQUENCE [GENOMIC DNA]</scope>
    <scope>FUNCTION</scope>
    <scope>DOMAIN</scope>
    <scope>SUBCELLULAR LOCATION</scope>
</reference>
<reference key="2">
    <citation type="journal article" date="1995" name="Nature">
        <title>A giant nucleopore protein that binds Ran/TC4.</title>
        <authorList>
            <person name="Yokoyama N."/>
            <person name="Hayashi N."/>
            <person name="Seki T."/>
            <person name="Nishii K."/>
            <person name="Hayashida T."/>
            <person name="Kuma K."/>
            <person name="Miyata T."/>
            <person name="Fukui M."/>
            <person name="Nishimoto T."/>
            <person name="Pante N."/>
            <person name="Aebi U."/>
        </authorList>
    </citation>
    <scope>NUCLEOTIDE SEQUENCE [MRNA]</scope>
    <scope>IDENTIFICATION IN THE NUCLEAR PORE COMPLEX</scope>
    <scope>SUBCELLULAR LOCATION</scope>
    <scope>VARIANT LYS-784</scope>
    <source>
        <tissue>Blood</tissue>
    </source>
</reference>
<reference key="3">
    <citation type="journal article" date="2005" name="Nature">
        <title>Generation and annotation of the DNA sequences of human chromosomes 2 and 4.</title>
        <authorList>
            <person name="Hillier L.W."/>
            <person name="Graves T.A."/>
            <person name="Fulton R.S."/>
            <person name="Fulton L.A."/>
            <person name="Pepin K.H."/>
            <person name="Minx P."/>
            <person name="Wagner-McPherson C."/>
            <person name="Layman D."/>
            <person name="Wylie K."/>
            <person name="Sekhon M."/>
            <person name="Becker M.C."/>
            <person name="Fewell G.A."/>
            <person name="Delehaunty K.D."/>
            <person name="Miner T.L."/>
            <person name="Nash W.E."/>
            <person name="Kremitzki C."/>
            <person name="Oddy L."/>
            <person name="Du H."/>
            <person name="Sun H."/>
            <person name="Bradshaw-Cordum H."/>
            <person name="Ali J."/>
            <person name="Carter J."/>
            <person name="Cordes M."/>
            <person name="Harris A."/>
            <person name="Isak A."/>
            <person name="van Brunt A."/>
            <person name="Nguyen C."/>
            <person name="Du F."/>
            <person name="Courtney L."/>
            <person name="Kalicki J."/>
            <person name="Ozersky P."/>
            <person name="Abbott S."/>
            <person name="Armstrong J."/>
            <person name="Belter E.A."/>
            <person name="Caruso L."/>
            <person name="Cedroni M."/>
            <person name="Cotton M."/>
            <person name="Davidson T."/>
            <person name="Desai A."/>
            <person name="Elliott G."/>
            <person name="Erb T."/>
            <person name="Fronick C."/>
            <person name="Gaige T."/>
            <person name="Haakenson W."/>
            <person name="Haglund K."/>
            <person name="Holmes A."/>
            <person name="Harkins R."/>
            <person name="Kim K."/>
            <person name="Kruchowski S.S."/>
            <person name="Strong C.M."/>
            <person name="Grewal N."/>
            <person name="Goyea E."/>
            <person name="Hou S."/>
            <person name="Levy A."/>
            <person name="Martinka S."/>
            <person name="Mead K."/>
            <person name="McLellan M.D."/>
            <person name="Meyer R."/>
            <person name="Randall-Maher J."/>
            <person name="Tomlinson C."/>
            <person name="Dauphin-Kohlberg S."/>
            <person name="Kozlowicz-Reilly A."/>
            <person name="Shah N."/>
            <person name="Swearengen-Shahid S."/>
            <person name="Snider J."/>
            <person name="Strong J.T."/>
            <person name="Thompson J."/>
            <person name="Yoakum M."/>
            <person name="Leonard S."/>
            <person name="Pearman C."/>
            <person name="Trani L."/>
            <person name="Radionenko M."/>
            <person name="Waligorski J.E."/>
            <person name="Wang C."/>
            <person name="Rock S.M."/>
            <person name="Tin-Wollam A.-M."/>
            <person name="Maupin R."/>
            <person name="Latreille P."/>
            <person name="Wendl M.C."/>
            <person name="Yang S.-P."/>
            <person name="Pohl C."/>
            <person name="Wallis J.W."/>
            <person name="Spieth J."/>
            <person name="Bieri T.A."/>
            <person name="Berkowicz N."/>
            <person name="Nelson J.O."/>
            <person name="Osborne J."/>
            <person name="Ding L."/>
            <person name="Meyer R."/>
            <person name="Sabo A."/>
            <person name="Shotland Y."/>
            <person name="Sinha P."/>
            <person name="Wohldmann P.E."/>
            <person name="Cook L.L."/>
            <person name="Hickenbotham M.T."/>
            <person name="Eldred J."/>
            <person name="Williams D."/>
            <person name="Jones T.A."/>
            <person name="She X."/>
            <person name="Ciccarelli F.D."/>
            <person name="Izaurralde E."/>
            <person name="Taylor J."/>
            <person name="Schmutz J."/>
            <person name="Myers R.M."/>
            <person name="Cox D.R."/>
            <person name="Huang X."/>
            <person name="McPherson J.D."/>
            <person name="Mardis E.R."/>
            <person name="Clifton S.W."/>
            <person name="Warren W.C."/>
            <person name="Chinwalla A.T."/>
            <person name="Eddy S.R."/>
            <person name="Marra M.A."/>
            <person name="Ovcharenko I."/>
            <person name="Furey T.S."/>
            <person name="Miller W."/>
            <person name="Eichler E.E."/>
            <person name="Bork P."/>
            <person name="Suyama M."/>
            <person name="Torrents D."/>
            <person name="Waterston R.H."/>
            <person name="Wilson R.K."/>
        </authorList>
    </citation>
    <scope>NUCLEOTIDE SEQUENCE [LARGE SCALE GENOMIC DNA]</scope>
</reference>
<reference key="4">
    <citation type="submission" date="2005-03" db="EMBL/GenBank/DDBJ databases">
        <authorList>
            <person name="Totoki Y."/>
            <person name="Toyoda A."/>
            <person name="Takeda T."/>
            <person name="Sakaki Y."/>
            <person name="Tanaka A."/>
            <person name="Yokoyama S."/>
            <person name="Ohara O."/>
            <person name="Nagase T."/>
            <person name="Kikuno R.F."/>
        </authorList>
    </citation>
    <scope>NUCLEOTIDE SEQUENCE [LARGE SCALE MRNA] OF 87-3224</scope>
    <source>
        <tissue>Brain</tissue>
    </source>
</reference>
<reference key="5">
    <citation type="journal article" date="1995" name="Proc. Natl. Acad. Sci. U.S.A.">
        <title>The Ran/TC4 GTPase-binding domain: identification by expression cloning and characterization of a conserved sequence motif.</title>
        <authorList>
            <person name="Beddow A.L."/>
            <person name="Richards S.A."/>
            <person name="Orem N.R."/>
            <person name="Macara I.G."/>
        </authorList>
    </citation>
    <scope>NUCLEOTIDE SEQUENCE [MRNA] OF 2205-2546</scope>
    <source>
        <tissue>Hippocampus</tissue>
    </source>
</reference>
<reference key="6">
    <citation type="journal article" date="2002" name="Cell">
        <title>The nucleoporin RanBP2 has SUMO1 E3 ligase activity.</title>
        <authorList>
            <person name="Pichler A."/>
            <person name="Gast A."/>
            <person name="Seeler J.S."/>
            <person name="Dejean A."/>
            <person name="Melchior F."/>
        </authorList>
    </citation>
    <scope>FUNCTION</scope>
    <scope>CATALYTIC ACTIVITY</scope>
    <scope>SUMOYLATION</scope>
</reference>
<reference key="7">
    <citation type="journal article" date="2002" name="EMBO J.">
        <title>The SUMO E3 ligase RanBP2 promotes modification of the HDAC4 deacetylase.</title>
        <authorList>
            <person name="Kirsh O."/>
            <person name="Seeler J.-S."/>
            <person name="Pichler A."/>
            <person name="Gast A."/>
            <person name="Mueller S."/>
            <person name="Miska E."/>
            <person name="Mathieu M."/>
            <person name="Harel-Bellan A."/>
            <person name="Kouzarides T."/>
            <person name="Melchior F."/>
            <person name="Dejean A."/>
        </authorList>
    </citation>
    <scope>FUNCTION</scope>
    <scope>CATALYTIC ACTIVITY</scope>
</reference>
<reference key="8">
    <citation type="journal article" date="2002" name="J. Cell Biol.">
        <title>Tpr is localized within the nuclear basket of the pore complex and has a role in nuclear protein export.</title>
        <authorList>
            <person name="Frosst P."/>
            <person name="Guan T."/>
            <person name="Subauste C."/>
            <person name="Hahn K."/>
            <person name="Gerace L."/>
        </authorList>
    </citation>
    <scope>IDENTIFICATION IN THE NUCLEAR PORE COMPLEX</scope>
    <scope>SUBCELLULAR LOCATION</scope>
</reference>
<reference key="9">
    <citation type="journal article" date="2004" name="Anal. Chem.">
        <title>Robust phosphoproteomic profiling of tyrosine phosphorylation sites from human T cells using immobilized metal affinity chromatography and tandem mass spectrometry.</title>
        <authorList>
            <person name="Brill L.M."/>
            <person name="Salomon A.R."/>
            <person name="Ficarro S.B."/>
            <person name="Mukherji M."/>
            <person name="Stettler-Gill M."/>
            <person name="Peters E.C."/>
        </authorList>
    </citation>
    <scope>IDENTIFICATION BY MASS SPECTROMETRY [LARGE SCALE ANALYSIS]</scope>
    <source>
        <tissue>Leukemic T-cell</tissue>
    </source>
</reference>
<reference key="10">
    <citation type="journal article" date="2004" name="Mol. Cell. Biol.">
        <title>RanBP2/Nup358 provides a major binding site for NXF1-p15 dimers at the nuclear pore complex and functions in nuclear mRNA export.</title>
        <authorList>
            <person name="Forler D."/>
            <person name="Rabut G."/>
            <person name="Ciccarelli F.D."/>
            <person name="Herold A."/>
            <person name="Koecher T."/>
            <person name="Niggeweg R."/>
            <person name="Bork P."/>
            <person name="Ellenberg J."/>
            <person name="Izaurralde E."/>
        </authorList>
    </citation>
    <scope>IDENTIFICATION IN A COMPLEX WITH RANGAP1; NXF1 AND NXT1</scope>
</reference>
<reference key="11">
    <citation type="journal article" date="2004" name="Nat. Struct. Mol. Biol.">
        <title>The RanBP2 SUMO E3 ligase is neither HECT- nor RING-type.</title>
        <authorList>
            <person name="Pichler A."/>
            <person name="Knipscheer P."/>
            <person name="Saitoh H."/>
            <person name="Sixma T.K."/>
            <person name="Melchior F."/>
        </authorList>
    </citation>
    <scope>FUNCTION</scope>
    <scope>CATALYTIC ACTIVITY</scope>
    <scope>INTERACTION WITH UBE2I</scope>
    <scope>SUMOYLATION AT LYS-2592</scope>
    <scope>MUTAGENESIS OF PRO-2640; LYS-2645; LEU-2651; LYS-2652; LEU-2653; PRO-2654; PRO-2655; THR-2656; PHE-2657; PHE-2658; CYS-2659; ASP-2676; PHE-2677 AND TYR-2689</scope>
</reference>
<reference key="12">
    <citation type="journal article" date="2004" name="Proc. Natl. Acad. Sci. U.S.A.">
        <title>Identification of a SUMO-binding motif that recognizes SUMO-modified proteins.</title>
        <authorList>
            <person name="Song J."/>
            <person name="Durrin L.K."/>
            <person name="Wilkinson T.A."/>
            <person name="Krontiris T.G."/>
            <person name="Chen Y."/>
        </authorList>
    </citation>
    <scope>INTERACTION WITH SUMOYLATED RANGAP1</scope>
    <scope>MUTAGENESIS OF VAL-2632; ILE-2634 AND VAL-2635</scope>
</reference>
<reference key="13">
    <citation type="journal article" date="2005" name="Nat. Struct. Mol. Biol.">
        <title>Unique binding interactions among Ubc9, SUMO and RanBP2 reveal a mechanism for SUMO paralog selection.</title>
        <authorList>
            <person name="Tatham M.H."/>
            <person name="Kim S."/>
            <person name="Jaffray E."/>
            <person name="Song J."/>
            <person name="Chen Y."/>
            <person name="Hay R.T."/>
        </authorList>
    </citation>
    <scope>INTERACTION WITH SUMO1 AND UBE2I</scope>
</reference>
<reference key="14">
    <citation type="journal article" date="2006" name="Arch. Biochem. Biophys.">
        <title>A general approach for investigating enzymatic pathways and substrates for ubiquitin-like modifiers.</title>
        <authorList>
            <person name="Li T."/>
            <person name="Santockyte R."/>
            <person name="Shen R.-F."/>
            <person name="Tekle E."/>
            <person name="Wang G."/>
            <person name="Yang D.C.H."/>
            <person name="Chock P.B."/>
        </authorList>
    </citation>
    <scope>IDENTIFICATION BY MASS SPECTROMETRY</scope>
</reference>
<reference key="15">
    <citation type="journal article" date="2006" name="Cell">
        <title>Global, in vivo, and site-specific phosphorylation dynamics in signaling networks.</title>
        <authorList>
            <person name="Olsen J.V."/>
            <person name="Blagoev B."/>
            <person name="Gnad F."/>
            <person name="Macek B."/>
            <person name="Kumar C."/>
            <person name="Mortensen P."/>
            <person name="Mann M."/>
        </authorList>
    </citation>
    <scope>IDENTIFICATION BY MASS SPECTROMETRY [LARGE SCALE ANALYSIS]</scope>
    <source>
        <tissue>Cervix carcinoma</tissue>
    </source>
</reference>
<reference key="16">
    <citation type="journal article" date="2006" name="J. Biol. Chem.">
        <title>Parkin ubiquitinates and promotes the degradation of RanBP2.</title>
        <authorList>
            <person name="Um J.W."/>
            <person name="Min D.S."/>
            <person name="Rhim H."/>
            <person name="Kim J."/>
            <person name="Paik S.R."/>
            <person name="Chung K.C."/>
        </authorList>
    </citation>
    <scope>INTERACTION WITH PRKN</scope>
    <scope>UBIQUITINATION</scope>
</reference>
<reference key="17">
    <citation type="journal article" date="2006" name="Nat. Biotechnol.">
        <title>A probability-based approach for high-throughput protein phosphorylation analysis and site localization.</title>
        <authorList>
            <person name="Beausoleil S.A."/>
            <person name="Villen J."/>
            <person name="Gerber S.A."/>
            <person name="Rush J."/>
            <person name="Gygi S.P."/>
        </authorList>
    </citation>
    <scope>PHOSPHORYLATION [LARGE SCALE ANALYSIS] AT SER-21 AND THR-1144</scope>
    <scope>IDENTIFICATION BY MASS SPECTROMETRY [LARGE SCALE ANALYSIS]</scope>
    <source>
        <tissue>Cervix carcinoma</tissue>
    </source>
</reference>
<reference key="18">
    <citation type="journal article" date="2008" name="J. Proteome Res.">
        <title>Combining protein-based IMAC, peptide-based IMAC, and MudPIT for efficient phosphoproteomic analysis.</title>
        <authorList>
            <person name="Cantin G.T."/>
            <person name="Yi W."/>
            <person name="Lu B."/>
            <person name="Park S.K."/>
            <person name="Xu T."/>
            <person name="Lee J.-D."/>
            <person name="Yates J.R. III"/>
        </authorList>
    </citation>
    <scope>IDENTIFICATION BY MASS SPECTROMETRY [LARGE SCALE ANALYSIS]</scope>
    <source>
        <tissue>Cervix carcinoma</tissue>
    </source>
</reference>
<reference key="19">
    <citation type="journal article" date="2008" name="Mol. Cell">
        <title>Kinase-selective enrichment enables quantitative phosphoproteomics of the kinome across the cell cycle.</title>
        <authorList>
            <person name="Daub H."/>
            <person name="Olsen J.V."/>
            <person name="Bairlein M."/>
            <person name="Gnad F."/>
            <person name="Oppermann F.S."/>
            <person name="Korner R."/>
            <person name="Greff Z."/>
            <person name="Keri G."/>
            <person name="Stemmann O."/>
            <person name="Mann M."/>
        </authorList>
    </citation>
    <scope>IDENTIFICATION BY MASS SPECTROMETRY [LARGE SCALE ANALYSIS]</scope>
    <source>
        <tissue>Cervix carcinoma</tissue>
    </source>
</reference>
<reference key="20">
    <citation type="journal article" date="2008" name="Proc. Natl. Acad. Sci. U.S.A.">
        <title>A quantitative atlas of mitotic phosphorylation.</title>
        <authorList>
            <person name="Dephoure N."/>
            <person name="Zhou C."/>
            <person name="Villen J."/>
            <person name="Beausoleil S.A."/>
            <person name="Bakalarski C.E."/>
            <person name="Elledge S.J."/>
            <person name="Gygi S.P."/>
        </authorList>
    </citation>
    <scope>PHOSPHORYLATION [LARGE SCALE ANALYSIS] AT THR-19; SER-21; SER-781; SER-948; SER-955; SER-1110; THR-1144; SER-1160; THR-1396; SER-1443; SER-1456; SER-1509; SER-1573; SER-1869; SER-2270; THR-2613; SER-2668; SER-2741; THR-2743 AND SER-2900</scope>
    <scope>IDENTIFICATION BY MASS SPECTROMETRY [LARGE SCALE ANALYSIS]</scope>
    <source>
        <tissue>Cervix carcinoma</tissue>
    </source>
</reference>
<reference key="21">
    <citation type="journal article" date="2008" name="Proteomics">
        <title>Large-scale phosphoproteome analysis of human liver tissue by enrichment and fractionation of phosphopeptides with strong anion exchange chromatography.</title>
        <authorList>
            <person name="Han G."/>
            <person name="Ye M."/>
            <person name="Zhou H."/>
            <person name="Jiang X."/>
            <person name="Feng S."/>
            <person name="Jiang X."/>
            <person name="Tian R."/>
            <person name="Wan D."/>
            <person name="Zou H."/>
            <person name="Gu J."/>
        </authorList>
    </citation>
    <scope>IDENTIFICATION BY MASS SPECTROMETRY [LARGE SCALE ANALYSIS]</scope>
    <source>
        <tissue>Liver</tissue>
    </source>
</reference>
<reference key="22">
    <citation type="journal article" date="2009" name="Anal. Chem.">
        <title>Lys-N and trypsin cover complementary parts of the phosphoproteome in a refined SCX-based approach.</title>
        <authorList>
            <person name="Gauci S."/>
            <person name="Helbig A.O."/>
            <person name="Slijper M."/>
            <person name="Krijgsveld J."/>
            <person name="Heck A.J."/>
            <person name="Mohammed S."/>
        </authorList>
    </citation>
    <scope>IDENTIFICATION BY MASS SPECTROMETRY [LARGE SCALE ANALYSIS]</scope>
</reference>
<reference key="23">
    <citation type="journal article" date="2009" name="Mol. Biol. Cell">
        <title>RanBP2 and SENP3 function in a mitotic SUMO2/3 conjugation-deconjugation cycle on Borealin.</title>
        <authorList>
            <person name="Klein U.R."/>
            <person name="Haindl M."/>
            <person name="Nigg E.A."/>
            <person name="Muller S."/>
        </authorList>
    </citation>
    <scope>INTERACTION WITH CDCA8</scope>
</reference>
<reference key="24">
    <citation type="journal article" date="2009" name="Sci. Signal.">
        <title>Quantitative phosphoproteomic analysis of T cell receptor signaling reveals system-wide modulation of protein-protein interactions.</title>
        <authorList>
            <person name="Mayya V."/>
            <person name="Lundgren D.H."/>
            <person name="Hwang S.-I."/>
            <person name="Rezaul K."/>
            <person name="Wu L."/>
            <person name="Eng J.K."/>
            <person name="Rodionov V."/>
            <person name="Han D.K."/>
        </authorList>
    </citation>
    <scope>PHOSPHORYLATION [LARGE SCALE ANALYSIS] AT THR-19; SER-21; SER-955; SER-1107; THR-1396; SER-1871; SER-2270; SER-2668 AND SER-2900</scope>
    <scope>IDENTIFICATION BY MASS SPECTROMETRY [LARGE SCALE ANALYSIS]</scope>
    <source>
        <tissue>Leukemic T-cell</tissue>
    </source>
</reference>
<reference key="25">
    <citation type="journal article" date="2010" name="Curr. Biol.">
        <title>mRNA export from mammalian cell nuclei is dependent on GANP.</title>
        <authorList>
            <person name="Wickramasinghe V.O."/>
            <person name="McMurtrie P.I."/>
            <person name="Mills A.D."/>
            <person name="Takei Y."/>
            <person name="Penrhyn-Lowe S."/>
            <person name="Amagase Y."/>
            <person name="Main S."/>
            <person name="Marr J."/>
            <person name="Stewart M."/>
            <person name="Laskey R.A."/>
        </authorList>
    </citation>
    <scope>INTERACTION WITH MCM3AP</scope>
</reference>
<reference key="26">
    <citation type="journal article" date="2010" name="PLoS Biol.">
        <title>Bicaudal D2, dynein, and kinesin-1 associate with nuclear pore complexes and regulate centrosome and nuclear positioning during mitotic entry.</title>
        <authorList>
            <person name="Splinter D."/>
            <person name="Tanenbaum M.E."/>
            <person name="Lindqvist A."/>
            <person name="Jaarsma D."/>
            <person name="Flotho A."/>
            <person name="Yu K.L."/>
            <person name="Grigoriev I."/>
            <person name="Engelsma D."/>
            <person name="Haasdijk E.D."/>
            <person name="Keijzer N."/>
            <person name="Demmers J."/>
            <person name="Fornerod M."/>
            <person name="Melchior F."/>
            <person name="Hoogenraad C.C."/>
            <person name="Medema R.H."/>
            <person name="Akhmanova A."/>
        </authorList>
    </citation>
    <scope>FUNCTION</scope>
    <scope>IDENTIFICATION IN THE NUCLEAR PORE COMPLEX</scope>
    <scope>INTERACTION WITH BICD2</scope>
    <scope>SUBCELLULAR LOCATION</scope>
</reference>
<reference key="27">
    <citation type="journal article" date="2010" name="PLoS Biol.">
        <title>Structural and biochemical characterization of the human cyclophilin family of peptidyl-prolyl isomerases.</title>
        <authorList>
            <person name="Davis T.L."/>
            <person name="Walker J.R."/>
            <person name="Campagna-Slater V."/>
            <person name="Finerty P.J."/>
            <person name="Paramanathan R."/>
            <person name="Bernstein G."/>
            <person name="MacKenzie F."/>
            <person name="Tempel W."/>
            <person name="Ouyang H."/>
            <person name="Lee W.H."/>
            <person name="Eisenmesser E.Z."/>
            <person name="Dhe-Paganon S."/>
        </authorList>
    </citation>
    <scope>FUNCTION</scope>
    <scope>CAUTION</scope>
</reference>
<reference key="28">
    <citation type="journal article" date="2010" name="Sci. Signal.">
        <title>Quantitative phosphoproteomics reveals widespread full phosphorylation site occupancy during mitosis.</title>
        <authorList>
            <person name="Olsen J.V."/>
            <person name="Vermeulen M."/>
            <person name="Santamaria A."/>
            <person name="Kumar C."/>
            <person name="Miller M.L."/>
            <person name="Jensen L.J."/>
            <person name="Gnad F."/>
            <person name="Cox J."/>
            <person name="Jensen T.S."/>
            <person name="Nigg E.A."/>
            <person name="Brunak S."/>
            <person name="Mann M."/>
        </authorList>
    </citation>
    <scope>PHOSPHORYLATION [LARGE SCALE ANALYSIS] AT THR-19; SER-21; SER-781; SER-837; SER-948; SER-955; SER-1110; SER-1160; THR-1412; SER-1509; SER-1835; SER-2900 AND SER-3207</scope>
    <scope>IDENTIFICATION BY MASS SPECTROMETRY [LARGE SCALE ANALYSIS]</scope>
    <source>
        <tissue>Cervix carcinoma</tissue>
    </source>
</reference>
<reference key="29">
    <citation type="journal article" date="2011" name="BMC Syst. Biol.">
        <title>Initial characterization of the human central proteome.</title>
        <authorList>
            <person name="Burkard T.R."/>
            <person name="Planyavsky M."/>
            <person name="Kaupe I."/>
            <person name="Breitwieser F.P."/>
            <person name="Buerckstuemmer T."/>
            <person name="Bennett K.L."/>
            <person name="Superti-Furga G."/>
            <person name="Colinge J."/>
        </authorList>
    </citation>
    <scope>IDENTIFICATION BY MASS SPECTROMETRY [LARGE SCALE ANALYSIS]</scope>
</reference>
<reference key="30">
    <citation type="journal article" date="2011" name="Sci. Signal.">
        <title>System-wide temporal characterization of the proteome and phosphoproteome of human embryonic stem cell differentiation.</title>
        <authorList>
            <person name="Rigbolt K.T."/>
            <person name="Prokhorova T.A."/>
            <person name="Akimov V."/>
            <person name="Henningsen J."/>
            <person name="Johansen P.T."/>
            <person name="Kratchmarova I."/>
            <person name="Kassem M."/>
            <person name="Mann M."/>
            <person name="Olsen J.V."/>
            <person name="Blagoev B."/>
        </authorList>
    </citation>
    <scope>PHOSPHORYLATION [LARGE SCALE ANALYSIS] AT SER-1160; SER-1456; SER-2668; SER-2900 AND SER-3207</scope>
    <scope>IDENTIFICATION BY MASS SPECTROMETRY [LARGE SCALE ANALYSIS]</scope>
</reference>
<reference key="31">
    <citation type="journal article" date="2012" name="Cell Rep.">
        <title>The oncogene eIF4E reprograms the nuclear pore complex to promote mRNA export and oncogenic transformation.</title>
        <authorList>
            <person name="Culjkovic-Kraljacic B."/>
            <person name="Baguet A."/>
            <person name="Volpon L."/>
            <person name="Amri A."/>
            <person name="Borden K.L."/>
        </authorList>
    </citation>
    <scope>FUNCTION</scope>
</reference>
<reference key="32">
    <citation type="journal article" date="2012" name="Gastroenterology">
        <title>Beta-catenin inhibits promyelocytic leukemia protein tumor suppressor function in colorectal cancer cells.</title>
        <authorList>
            <person name="Satow R."/>
            <person name="Shitashige M."/>
            <person name="Jigami T."/>
            <person name="Fukami K."/>
            <person name="Honda K."/>
            <person name="Kitabayashi I."/>
            <person name="Yamada T."/>
        </authorList>
    </citation>
    <scope>FUNCTION</scope>
    <scope>INTERACTION WITH PML</scope>
</reference>
<reference key="33">
    <citation type="journal article" date="2013" name="J. Proteome Res.">
        <title>Toward a comprehensive characterization of a human cancer cell phosphoproteome.</title>
        <authorList>
            <person name="Zhou H."/>
            <person name="Di Palma S."/>
            <person name="Preisinger C."/>
            <person name="Peng M."/>
            <person name="Polat A.N."/>
            <person name="Heck A.J."/>
            <person name="Mohammed S."/>
        </authorList>
    </citation>
    <scope>PHOSPHORYLATION [LARGE SCALE ANALYSIS] AT SER-21; THR-779; SER-781; SER-948; SER-955; THR-1098; SER-1103; SER-1107; SER-1110; THR-1144; SER-1160; SER-1249; THR-1396; THR-1412; SER-1450; SER-1456; SER-1509; SER-1520; SER-1573; SER-1833; SER-1835; SER-1869; SER-2270; SER-2526; THR-2613; TYR-2666; SER-2668; SER-2805 AND SER-3207</scope>
    <scope>IDENTIFICATION BY MASS SPECTROMETRY [LARGE SCALE ANALYSIS]</scope>
    <source>
        <tissue>Cervix carcinoma</tissue>
        <tissue>Erythroleukemia</tissue>
    </source>
</reference>
<reference key="34">
    <citation type="journal article" date="2014" name="J. Proteomics">
        <title>An enzyme assisted RP-RPLC approach for in-depth analysis of human liver phosphoproteome.</title>
        <authorList>
            <person name="Bian Y."/>
            <person name="Song C."/>
            <person name="Cheng K."/>
            <person name="Dong M."/>
            <person name="Wang F."/>
            <person name="Huang J."/>
            <person name="Sun D."/>
            <person name="Wang L."/>
            <person name="Ye M."/>
            <person name="Zou H."/>
        </authorList>
    </citation>
    <scope>PHOSPHORYLATION [LARGE SCALE ANALYSIS] AT SER-955; SER-1160; SER-1450; SER-1456; SER-1509; SER-2668 AND SER-2900</scope>
    <scope>IDENTIFICATION BY MASS SPECTROMETRY [LARGE SCALE ANALYSIS]</scope>
    <source>
        <tissue>Liver</tissue>
    </source>
</reference>
<reference key="35">
    <citation type="journal article" date="2014" name="Mol. Cell. Proteomics">
        <title>Immunoaffinity enrichment and mass spectrometry analysis of protein methylation.</title>
        <authorList>
            <person name="Guo A."/>
            <person name="Gu H."/>
            <person name="Zhou J."/>
            <person name="Mulhern D."/>
            <person name="Wang Y."/>
            <person name="Lee K.A."/>
            <person name="Yang V."/>
            <person name="Aguiar M."/>
            <person name="Kornhauser J."/>
            <person name="Jia X."/>
            <person name="Ren J."/>
            <person name="Beausoleil S.A."/>
            <person name="Silva J.C."/>
            <person name="Vemulapalli V."/>
            <person name="Bedford M.T."/>
            <person name="Comb M.J."/>
        </authorList>
    </citation>
    <scope>METHYLATION [LARGE SCALE ANALYSIS] AT ARG-945 AND ARG-1016</scope>
    <scope>IDENTIFICATION BY MASS SPECTROMETRY [LARGE SCALE ANALYSIS]</scope>
    <source>
        <tissue>Colon carcinoma</tissue>
    </source>
</reference>
<reference key="36">
    <citation type="journal article" date="2014" name="Nat. Struct. Mol. Biol.">
        <title>Uncovering global SUMOylation signaling networks in a site-specific manner.</title>
        <authorList>
            <person name="Hendriks I.A."/>
            <person name="D'Souza R.C."/>
            <person name="Yang B."/>
            <person name="Verlaan-de Vries M."/>
            <person name="Mann M."/>
            <person name="Vertegaal A.C."/>
        </authorList>
    </citation>
    <scope>SUMOYLATION [LARGE SCALE ANALYSIS] AT LYS-1414</scope>
    <scope>IDENTIFICATION BY MASS SPECTROMETRY [LARGE SCALE ANALYSIS]</scope>
</reference>
<reference key="37">
    <citation type="journal article" date="2014" name="Proc. Natl. Acad. Sci. U.S.A.">
        <title>Mapping of SUMO sites and analysis of SUMOylation changes induced by external stimuli.</title>
        <authorList>
            <person name="Impens F."/>
            <person name="Radoshevich L."/>
            <person name="Cossart P."/>
            <person name="Ribet D."/>
        </authorList>
    </citation>
    <scope>SUMOYLATION [LARGE SCALE ANALYSIS] AT LYS-1605; LYS-1664; LYS-1723; LYS-2594 AND LYS-2792</scope>
    <scope>IDENTIFICATION BY MASS SPECTROMETRY [LARGE SCALE ANALYSIS]</scope>
</reference>
<reference key="38">
    <citation type="journal article" date="2015" name="Cell Rep.">
        <title>SUMO-2 orchestrates chromatin modifiers in response to DNA damage.</title>
        <authorList>
            <person name="Hendriks I.A."/>
            <person name="Treffers L.W."/>
            <person name="Verlaan-de Vries M."/>
            <person name="Olsen J.V."/>
            <person name="Vertegaal A.C."/>
        </authorList>
    </citation>
    <scope>SUMOYLATION [LARGE SCALE ANALYSIS] AT LYS-1414</scope>
    <scope>IDENTIFICATION BY MASS SPECTROMETRY [LARGE SCALE ANALYSIS]</scope>
</reference>
<reference key="39">
    <citation type="journal article" date="2015" name="Mol. Cell. Proteomics">
        <title>System-wide analysis of SUMOylation dynamics in response to replication stress reveals novel small ubiquitin-like modified target proteins and acceptor lysines relevant for genome stability.</title>
        <authorList>
            <person name="Xiao Z."/>
            <person name="Chang J.G."/>
            <person name="Hendriks I.A."/>
            <person name="Sigurdsson J.O."/>
            <person name="Olsen J.V."/>
            <person name="Vertegaal A.C."/>
        </authorList>
    </citation>
    <scope>SUMOYLATION [LARGE SCALE ANALYSIS] AT LYS-1414; LYS-1605; LYS-1664 AND LYS-1723</scope>
    <scope>IDENTIFICATION BY MASS SPECTROMETRY [LARGE SCALE ANALYSIS]</scope>
</reference>
<reference key="40">
    <citation type="journal article" date="2017" name="Nat. Struct. Mol. Biol.">
        <title>Site-specific mapping of the human SUMO proteome reveals co-modification with phosphorylation.</title>
        <authorList>
            <person name="Hendriks I.A."/>
            <person name="Lyon D."/>
            <person name="Young C."/>
            <person name="Jensen L.J."/>
            <person name="Vertegaal A.C."/>
            <person name="Nielsen M.L."/>
        </authorList>
    </citation>
    <scope>SUMOYLATION [LARGE SCALE ANALYSIS] AT LYS-1350; LYS-1414; LYS-1596; LYS-1605; LYS-1655; LYS-1664; LYS-1714; LYS-1723; LYS-2022; LYS-2522; LYS-2594; LYS-2612; LYS-2792 AND LYS-2815</scope>
    <scope>IDENTIFICATION BY MASS SPECTROMETRY [LARGE SCALE ANALYSIS]</scope>
</reference>
<reference key="41">
    <citation type="journal article" date="2020" name="Nat. Microbiol.">
        <title>Vpu modulates DNA repair to suppress innate sensing and hyper-integration of HIV-1.</title>
        <authorList>
            <person name="Volcic M."/>
            <person name="Sparrer K.M.J."/>
            <person name="Koepke L."/>
            <person name="Hotter D."/>
            <person name="Sauter D."/>
            <person name="Stuerzel C.M."/>
            <person name="Scherer M."/>
            <person name="Stamminger T."/>
            <person name="Hofmann T.G."/>
            <person name="Arhel N.J."/>
            <person name="Wiesmueller L."/>
            <person name="Kirchhoff F."/>
        </authorList>
    </citation>
    <scope>INTERACTION WITH HIV-1 VPU (MICROBIAL INFECTION)</scope>
</reference>
<reference key="42">
    <citation type="journal article" date="1999" name="Nature">
        <title>Structure of a Ran-binding domain complexed with Ran bound to a GTP analogue: implications for nuclear transport.</title>
        <authorList>
            <person name="Vetter I.R."/>
            <person name="Nowak C."/>
            <person name="Nishimoto T."/>
            <person name="Kuhlmann J."/>
            <person name="Wittinghofer A."/>
        </authorList>
    </citation>
    <scope>X-RAY CRYSTALLOGRAPHY (2.96 ANGSTROMS) OF 1171-1304</scope>
    <scope>FUNCTION</scope>
</reference>
<reference key="43">
    <citation type="journal article" date="2005" name="J. Mol. Biol.">
        <title>Solution structure of the Ran-binding domain 2 of RanBP2 and its interaction with the C terminus of Ran.</title>
        <authorList>
            <person name="Geyer J.P."/>
            <person name="Doker R."/>
            <person name="Kremer W."/>
            <person name="Zhao X."/>
            <person name="Kuhlmann J."/>
            <person name="Kalbitzer H.R."/>
        </authorList>
    </citation>
    <scope>STRUCTURE BY NMR OF 2028-2154</scope>
</reference>
<reference key="44">
    <citation type="journal article" date="2005" name="Nature">
        <title>Insights into E3 ligase activity revealed by a SUMO-RanGAP1-Ubc9-Nup358 complex.</title>
        <authorList>
            <person name="Reverter D."/>
            <person name="Lima C.D."/>
        </authorList>
    </citation>
    <scope>X-RAY CRYSTALLOGRAPHY (3.01 ANGSTROMS) OF 2631-2711 IN COMPLEX WITH SUMO1; RANGAP1 AND UBE2I</scope>
    <scope>FUNCTION</scope>
    <scope>CATALYTIC ACTIVITY</scope>
    <scope>SUBUNIT</scope>
</reference>
<reference key="45">
    <citation type="journal article" date="2012" name="J. Biol. Chem.">
        <title>Determinants of small ubiquitin-like modifier 1 (SUMO1) protein specificity, E3 ligase, and SUMO-RanGAP1 binding activities of nucleoporin RanBP2.</title>
        <authorList>
            <person name="Gareau J.R."/>
            <person name="Reverter D."/>
            <person name="Lima C.D."/>
        </authorList>
    </citation>
    <scope>X-RAY CRYSTALLOGRAPHY (2.29 ANGSTROMS) OF 2631-2695 IN COMPLEX WITH SUMO1; RANGAP1 AND UBE2I</scope>
    <scope>FUNCTION</scope>
    <scope>CATALYTIC ACTIVITY</scope>
    <scope>SUBUNIT</scope>
</reference>
<reference key="46">
    <citation type="journal article" date="2012" name="J. Mol. Biol.">
        <title>Crystal structure of the N-terminal domain of Nup358/RanBP2.</title>
        <authorList>
            <person name="Kassube S.A."/>
            <person name="Stuwe T."/>
            <person name="Lin D.H."/>
            <person name="Antonuk C.D."/>
            <person name="Napetschnig J."/>
            <person name="Blobel G."/>
            <person name="Hoelz A."/>
        </authorList>
    </citation>
    <scope>X-RAY CRYSTALLOGRAPHY (1.15 ANGSTROMS) OF 1-145</scope>
    <scope>TPR REPEATS</scope>
</reference>
<reference key="47">
    <citation type="journal article" date="2013" name="J. Mol. Biol.">
        <title>Structural and functional analysis of the C-terminal domain of Nup358/RanBP2.</title>
        <authorList>
            <person name="Lin D.H."/>
            <person name="Zimmermann S."/>
            <person name="Stuwe T."/>
            <person name="Stuwe E."/>
            <person name="Hoelz A."/>
        </authorList>
    </citation>
    <scope>X-RAY CRYSTALLOGRAPHY (1.75 ANGSTROMS) OF 3062-3224</scope>
    <scope>FUNCTION</scope>
    <scope>IDENTIFICATION IN THE NUCLEAR PORE COMPLEX</scope>
    <scope>SUBCELLULAR LOCATION</scope>
    <scope>DOMAIN</scope>
    <scope>CAUTION</scope>
</reference>
<reference key="48">
    <citation type="journal article" date="2009" name="Am. J. Hum. Genet.">
        <title>Infection-triggered familial or recurrent cases of acute necrotizing encephalopathy caused by mutations in a component of the nuclear pore, RANBP2.</title>
        <authorList>
            <person name="Neilson D.E."/>
            <person name="Adams M.D."/>
            <person name="Orr C.M.D."/>
            <person name="Schelling D.K."/>
            <person name="Eiben R.M."/>
            <person name="Kerr D.S."/>
            <person name="Anderson J."/>
            <person name="Bassuk A.G."/>
            <person name="Bye A.M."/>
            <person name="Childs A.-M."/>
            <person name="Clarke A."/>
            <person name="Crow Y.J."/>
            <person name="Di Rocco M."/>
            <person name="Dohna-Schwake C."/>
            <person name="Dueckers G."/>
            <person name="Fasano A.E."/>
            <person name="Gika A.D."/>
            <person name="Gionnis D."/>
            <person name="Gorman M.P."/>
            <person name="Grattan-Smith P.J."/>
            <person name="Hackenberg A."/>
            <person name="Kuster A."/>
            <person name="Lentschig M.G."/>
            <person name="Lopez-Laso E."/>
            <person name="Marco E.J."/>
            <person name="Mastroyianni S."/>
            <person name="Perrier J."/>
            <person name="Schmitt-Mechelke T."/>
            <person name="Servidei S."/>
            <person name="Skardoutsou A."/>
            <person name="Uldall P."/>
            <person name="van der Knaap M.S."/>
            <person name="Goglin K.C."/>
            <person name="Tefft D.L."/>
            <person name="Aubin C."/>
            <person name="de Jager P."/>
            <person name="Hafler D."/>
            <person name="Warman M.L."/>
        </authorList>
    </citation>
    <scope>VARIANTS IIAE3 MET-585; ILE-653 AND VAL-656</scope>
</reference>
<reference key="49">
    <citation type="journal article" date="2013" name="Leukemia">
        <title>A translocation t(2;8)(q12;p11) fuses FGFR1 to a novel partner gene, RANBP2/NUP358, in a myeloproliferative/myelodysplastic neoplasm.</title>
        <authorList>
            <person name="Gervais C."/>
            <person name="Dano L."/>
            <person name="Perrusson N."/>
            <person name="Helias C."/>
            <person name="Jeandidier E."/>
            <person name="Galoisy A.C."/>
            <person name="Ittel A."/>
            <person name="Herbrecht R."/>
            <person name="Bilger K."/>
            <person name="Mauvieux L."/>
        </authorList>
    </citation>
    <scope>CHROMOSOMAL TRANSLOCATION WITH FGFR1</scope>
</reference>
<reference key="50">
    <citation type="journal article" date="2021" name="Neurosci. Lett.">
        <title>RANBP2 mutation causing autosomal dominant acute necrotizing encephalopathy attenuates its interaction with COX11.</title>
        <authorList>
            <person name="Shibata A."/>
            <person name="Kasai M."/>
            <person name="Hoshino A."/>
            <person name="Tanaka T."/>
            <person name="Mizuguchi M."/>
        </authorList>
    </citation>
    <scope>VARIANT IIAE3 MET-585</scope>
    <scope>CHARACTERIZATION OF VARIANT IIAE3 MET-585</scope>
    <scope>INTERACTION WITH COX11</scope>
</reference>
<name>RBP2_HUMAN</name>
<organism>
    <name type="scientific">Homo sapiens</name>
    <name type="common">Human</name>
    <dbReference type="NCBI Taxonomy" id="9606"/>
    <lineage>
        <taxon>Eukaryota</taxon>
        <taxon>Metazoa</taxon>
        <taxon>Chordata</taxon>
        <taxon>Craniata</taxon>
        <taxon>Vertebrata</taxon>
        <taxon>Euteleostomi</taxon>
        <taxon>Mammalia</taxon>
        <taxon>Eutheria</taxon>
        <taxon>Euarchontoglires</taxon>
        <taxon>Primates</taxon>
        <taxon>Haplorrhini</taxon>
        <taxon>Catarrhini</taxon>
        <taxon>Hominidae</taxon>
        <taxon>Homo</taxon>
    </lineage>
</organism>
<proteinExistence type="evidence at protein level"/>
<dbReference type="EC" id="2.3.2.-" evidence="8 10 12 16 23"/>
<dbReference type="EMBL" id="L41840">
    <property type="protein sequence ID" value="AAC41758.1"/>
    <property type="molecule type" value="Genomic_DNA"/>
</dbReference>
<dbReference type="EMBL" id="D42063">
    <property type="protein sequence ID" value="BAA07662.1"/>
    <property type="molecule type" value="mRNA"/>
</dbReference>
<dbReference type="EMBL" id="AC010095">
    <property type="protein sequence ID" value="AAY14984.1"/>
    <property type="molecule type" value="Genomic_DNA"/>
</dbReference>
<dbReference type="EMBL" id="AB209483">
    <property type="protein sequence ID" value="BAD92720.1"/>
    <property type="molecule type" value="mRNA"/>
</dbReference>
<dbReference type="EMBL" id="U19248">
    <property type="protein sequence ID" value="AAA85838.1"/>
    <property type="molecule type" value="mRNA"/>
</dbReference>
<dbReference type="CCDS" id="CCDS2079.1"/>
<dbReference type="PIR" id="S58884">
    <property type="entry name" value="S58884"/>
</dbReference>
<dbReference type="RefSeq" id="NP_006258.3">
    <property type="nucleotide sequence ID" value="NM_006267.4"/>
</dbReference>
<dbReference type="PDB" id="1RRP">
    <property type="method" value="X-ray"/>
    <property type="resolution" value="2.96 A"/>
    <property type="chains" value="B/D=1171-1304"/>
</dbReference>
<dbReference type="PDB" id="1XKE">
    <property type="method" value="NMR"/>
    <property type="chains" value="A=2028-2154"/>
</dbReference>
<dbReference type="PDB" id="1Z5S">
    <property type="method" value="X-ray"/>
    <property type="resolution" value="3.01 A"/>
    <property type="chains" value="D=2631-2711"/>
</dbReference>
<dbReference type="PDB" id="2LAS">
    <property type="method" value="NMR"/>
    <property type="chains" value="B=2705-2717"/>
</dbReference>
<dbReference type="PDB" id="3UIN">
    <property type="method" value="X-ray"/>
    <property type="resolution" value="2.60 A"/>
    <property type="chains" value="D=2629-2695"/>
</dbReference>
<dbReference type="PDB" id="3UIO">
    <property type="method" value="X-ray"/>
    <property type="resolution" value="2.60 A"/>
    <property type="chains" value="D=2631-2695"/>
</dbReference>
<dbReference type="PDB" id="3UIP">
    <property type="method" value="X-ray"/>
    <property type="resolution" value="2.29 A"/>
    <property type="chains" value="D=2631-2695"/>
</dbReference>
<dbReference type="PDB" id="4GA0">
    <property type="method" value="X-ray"/>
    <property type="resolution" value="1.15 A"/>
    <property type="chains" value="A=1-145"/>
</dbReference>
<dbReference type="PDB" id="4I9Y">
    <property type="method" value="X-ray"/>
    <property type="resolution" value="1.75 A"/>
    <property type="chains" value="A/B/C/D/E/F=3062-3224"/>
</dbReference>
<dbReference type="PDB" id="4L6E">
    <property type="method" value="X-ray"/>
    <property type="resolution" value="2.50 A"/>
    <property type="chains" value="A=2907-3050"/>
</dbReference>
<dbReference type="PDB" id="4LQW">
    <property type="method" value="X-ray"/>
    <property type="resolution" value="1.95 A"/>
    <property type="chains" value="A/B=3057-3224"/>
</dbReference>
<dbReference type="PDB" id="5CLL">
    <property type="method" value="X-ray"/>
    <property type="resolution" value="2.45 A"/>
    <property type="chains" value="B/D=1155-1321"/>
</dbReference>
<dbReference type="PDB" id="5CLQ">
    <property type="method" value="X-ray"/>
    <property type="resolution" value="3.20 A"/>
    <property type="chains" value="B/D=1155-1321"/>
</dbReference>
<dbReference type="PDB" id="7MNJ">
    <property type="method" value="X-ray"/>
    <property type="resolution" value="3.80 A"/>
    <property type="chains" value="A/B/C=145-673"/>
</dbReference>
<dbReference type="PDB" id="7MNK">
    <property type="method" value="X-ray"/>
    <property type="resolution" value="1.10 A"/>
    <property type="chains" value="A/B/C/D=805-832"/>
</dbReference>
<dbReference type="PDB" id="7MNL">
    <property type="method" value="X-ray"/>
    <property type="resolution" value="3.95 A"/>
    <property type="chains" value="A/B=1-752"/>
</dbReference>
<dbReference type="PDB" id="7MNM">
    <property type="method" value="X-ray"/>
    <property type="resolution" value="4.70 A"/>
    <property type="chains" value="A/B=1-752"/>
</dbReference>
<dbReference type="PDB" id="7MNN">
    <property type="method" value="X-ray"/>
    <property type="resolution" value="6.70 A"/>
    <property type="chains" value="A/B=1-752"/>
</dbReference>
<dbReference type="PDB" id="7MNO">
    <property type="method" value="X-ray"/>
    <property type="resolution" value="6.73 A"/>
    <property type="chains" value="A/B=1-752"/>
</dbReference>
<dbReference type="PDB" id="7MNP">
    <property type="method" value="X-ray"/>
    <property type="resolution" value="2.05 A"/>
    <property type="chains" value="B/D=1407-1443"/>
</dbReference>
<dbReference type="PDB" id="7MNQ">
    <property type="method" value="X-ray"/>
    <property type="resolution" value="2.05 A"/>
    <property type="chains" value="B=1407-1443"/>
</dbReference>
<dbReference type="PDB" id="7MNR">
    <property type="method" value="X-ray"/>
    <property type="resolution" value="1.80 A"/>
    <property type="chains" value="B=1471-1507"/>
</dbReference>
<dbReference type="PDB" id="7MNS">
    <property type="method" value="X-ray"/>
    <property type="resolution" value="2.10 A"/>
    <property type="chains" value="B=1535-1571"/>
</dbReference>
<dbReference type="PDB" id="7MNT">
    <property type="method" value="X-ray"/>
    <property type="resolution" value="2.45 A"/>
    <property type="chains" value="B/D=1657-1693"/>
</dbReference>
<dbReference type="PDB" id="7MNU">
    <property type="method" value="X-ray"/>
    <property type="resolution" value="2.00 A"/>
    <property type="chains" value="B=1716-1752"/>
</dbReference>
<dbReference type="PDB" id="7MNV">
    <property type="method" value="X-ray"/>
    <property type="resolution" value="1.80 A"/>
    <property type="chains" value="B=1773-1809"/>
</dbReference>
<dbReference type="PDB" id="7MNW">
    <property type="method" value="X-ray"/>
    <property type="resolution" value="2.40 A"/>
    <property type="chains" value="B/D/F/H=1171-1306"/>
</dbReference>
<dbReference type="PDB" id="7MNX">
    <property type="method" value="X-ray"/>
    <property type="resolution" value="2.40 A"/>
    <property type="chains" value="B/D/F/H/J/L=2012-2148"/>
</dbReference>
<dbReference type="PDB" id="7MNY">
    <property type="method" value="X-ray"/>
    <property type="resolution" value="2.70 A"/>
    <property type="chains" value="B/D/F/H/J/L=2309-2443"/>
</dbReference>
<dbReference type="PDB" id="7MNZ">
    <property type="method" value="X-ray"/>
    <property type="resolution" value="2.35 A"/>
    <property type="chains" value="B/D/F/H/J/L=2911-3045"/>
</dbReference>
<dbReference type="PDB" id="7R5J">
    <property type="method" value="EM"/>
    <property type="resolution" value="50.00 A"/>
    <property type="chains" value="00/01/02/03/04=1-3224"/>
</dbReference>
<dbReference type="PDB" id="7R5K">
    <property type="method" value="EM"/>
    <property type="resolution" value="12.00 A"/>
    <property type="chains" value="00/01/02/03/04=1-3224"/>
</dbReference>
<dbReference type="PDB" id="9B62">
    <property type="method" value="EM"/>
    <property type="resolution" value="2.90 A"/>
    <property type="chains" value="E=2446-3060"/>
</dbReference>
<dbReference type="PDBsum" id="1RRP"/>
<dbReference type="PDBsum" id="1XKE"/>
<dbReference type="PDBsum" id="1Z5S"/>
<dbReference type="PDBsum" id="2LAS"/>
<dbReference type="PDBsum" id="3UIN"/>
<dbReference type="PDBsum" id="3UIO"/>
<dbReference type="PDBsum" id="3UIP"/>
<dbReference type="PDBsum" id="4GA0"/>
<dbReference type="PDBsum" id="4I9Y"/>
<dbReference type="PDBsum" id="4L6E"/>
<dbReference type="PDBsum" id="4LQW"/>
<dbReference type="PDBsum" id="5CLL"/>
<dbReference type="PDBsum" id="5CLQ"/>
<dbReference type="PDBsum" id="7MNJ"/>
<dbReference type="PDBsum" id="7MNK"/>
<dbReference type="PDBsum" id="7MNL"/>
<dbReference type="PDBsum" id="7MNM"/>
<dbReference type="PDBsum" id="7MNN"/>
<dbReference type="PDBsum" id="7MNO"/>
<dbReference type="PDBsum" id="7MNP"/>
<dbReference type="PDBsum" id="7MNQ"/>
<dbReference type="PDBsum" id="7MNR"/>
<dbReference type="PDBsum" id="7MNS"/>
<dbReference type="PDBsum" id="7MNT"/>
<dbReference type="PDBsum" id="7MNU"/>
<dbReference type="PDBsum" id="7MNV"/>
<dbReference type="PDBsum" id="7MNW"/>
<dbReference type="PDBsum" id="7MNX"/>
<dbReference type="PDBsum" id="7MNY"/>
<dbReference type="PDBsum" id="7MNZ"/>
<dbReference type="PDBsum" id="7R5J"/>
<dbReference type="PDBsum" id="7R5K"/>
<dbReference type="PDBsum" id="9B62"/>
<dbReference type="EMDB" id="EMD-14321"/>
<dbReference type="EMDB" id="EMD-14322"/>
<dbReference type="EMDB" id="EMD-44235"/>
<dbReference type="EMDB" id="EMD-44236"/>
<dbReference type="EMDB" id="EMD-44237"/>
<dbReference type="EMDB" id="EMD-44238"/>
<dbReference type="EMDB" id="EMD-44239"/>
<dbReference type="EMDB" id="EMD-44240"/>
<dbReference type="EMDB" id="EMD-44241"/>
<dbReference type="EMDB" id="EMD-44242"/>
<dbReference type="EMDB" id="EMD-44243"/>
<dbReference type="SMR" id="P49792"/>
<dbReference type="BioGRID" id="111839">
    <property type="interactions" value="372"/>
</dbReference>
<dbReference type="ComplexPortal" id="CPX-4747">
    <property type="entry name" value="E3 ligase (RANBP2) complex"/>
</dbReference>
<dbReference type="ComplexPortal" id="CPX-873">
    <property type="entry name" value="Nuclear pore complex"/>
</dbReference>
<dbReference type="CORUM" id="P49792"/>
<dbReference type="DIP" id="DIP-37654N"/>
<dbReference type="FunCoup" id="P49792">
    <property type="interactions" value="4509"/>
</dbReference>
<dbReference type="IntAct" id="P49792">
    <property type="interactions" value="182"/>
</dbReference>
<dbReference type="MINT" id="P49792"/>
<dbReference type="STRING" id="9606.ENSP00000283195"/>
<dbReference type="TCDB" id="1.I.1.1.3">
    <property type="family name" value="the nuclear pore complex (npc) family"/>
</dbReference>
<dbReference type="GlyConnect" id="2890">
    <property type="glycosylation" value="1 O-GlcNAc glycan (1 site)"/>
</dbReference>
<dbReference type="GlyCosmos" id="P49792">
    <property type="glycosylation" value="36 sites, 3 glycans"/>
</dbReference>
<dbReference type="GlyGen" id="P49792">
    <property type="glycosylation" value="59 sites, 4 N-linked glycans (3 sites), 2 O-linked glycans (56 sites)"/>
</dbReference>
<dbReference type="iPTMnet" id="P49792"/>
<dbReference type="MetOSite" id="P49792"/>
<dbReference type="PhosphoSitePlus" id="P49792"/>
<dbReference type="SwissPalm" id="P49792"/>
<dbReference type="BioMuta" id="RANBP2"/>
<dbReference type="DMDM" id="83305554"/>
<dbReference type="OGP" id="P49792"/>
<dbReference type="CPTAC" id="CPTAC-996"/>
<dbReference type="jPOST" id="P49792"/>
<dbReference type="MassIVE" id="P49792"/>
<dbReference type="PaxDb" id="9606-ENSP00000283195"/>
<dbReference type="PeptideAtlas" id="P49792"/>
<dbReference type="ProteomicsDB" id="56121"/>
<dbReference type="Pumba" id="P49792"/>
<dbReference type="ABCD" id="P49792">
    <property type="antibodies" value="1 sequenced antibody"/>
</dbReference>
<dbReference type="Antibodypedia" id="33105">
    <property type="antibodies" value="205 antibodies from 25 providers"/>
</dbReference>
<dbReference type="DNASU" id="5903"/>
<dbReference type="Ensembl" id="ENST00000283195.11">
    <property type="protein sequence ID" value="ENSP00000283195.6"/>
    <property type="gene ID" value="ENSG00000153201.17"/>
</dbReference>
<dbReference type="GeneID" id="5903"/>
<dbReference type="KEGG" id="hsa:5903"/>
<dbReference type="MANE-Select" id="ENST00000283195.11">
    <property type="protein sequence ID" value="ENSP00000283195.6"/>
    <property type="RefSeq nucleotide sequence ID" value="NM_006267.5"/>
    <property type="RefSeq protein sequence ID" value="NP_006258.3"/>
</dbReference>
<dbReference type="UCSC" id="uc002tem.4">
    <property type="organism name" value="human"/>
</dbReference>
<dbReference type="AGR" id="HGNC:9848"/>
<dbReference type="CTD" id="5903"/>
<dbReference type="DisGeNET" id="5903"/>
<dbReference type="GeneCards" id="RANBP2"/>
<dbReference type="HGNC" id="HGNC:9848">
    <property type="gene designation" value="RANBP2"/>
</dbReference>
<dbReference type="HPA" id="ENSG00000153201">
    <property type="expression patterns" value="Low tissue specificity"/>
</dbReference>
<dbReference type="MalaCards" id="RANBP2"/>
<dbReference type="MIM" id="601181">
    <property type="type" value="gene"/>
</dbReference>
<dbReference type="MIM" id="608033">
    <property type="type" value="phenotype"/>
</dbReference>
<dbReference type="neXtProt" id="NX_P49792"/>
<dbReference type="OpenTargets" id="ENSG00000153201"/>
<dbReference type="Orphanet" id="263524">
    <property type="disease" value="Acute necrotizing encephalopathy of childhood"/>
</dbReference>
<dbReference type="Orphanet" id="88619">
    <property type="disease" value="Familial acute necrotizing encephalopathy"/>
</dbReference>
<dbReference type="Orphanet" id="178342">
    <property type="disease" value="Inflammatory myofibroblastic tumor"/>
</dbReference>
<dbReference type="PharmGKB" id="PA34209"/>
<dbReference type="VEuPathDB" id="HostDB:ENSG00000153201"/>
<dbReference type="eggNOG" id="KOG0864">
    <property type="taxonomic scope" value="Eukaryota"/>
</dbReference>
<dbReference type="eggNOG" id="KOG0865">
    <property type="taxonomic scope" value="Eukaryota"/>
</dbReference>
<dbReference type="GeneTree" id="ENSGT00940000154389"/>
<dbReference type="HOGENOM" id="CLU_000378_1_0_1"/>
<dbReference type="InParanoid" id="P49792"/>
<dbReference type="OMA" id="RCIGNHG"/>
<dbReference type="OrthoDB" id="9523654at2759"/>
<dbReference type="PAN-GO" id="P49792">
    <property type="GO annotations" value="4 GO annotations based on evolutionary models"/>
</dbReference>
<dbReference type="PhylomeDB" id="P49792"/>
<dbReference type="TreeFam" id="TF314797"/>
<dbReference type="PathwayCommons" id="P49792"/>
<dbReference type="Reactome" id="R-HSA-1169408">
    <property type="pathway name" value="ISG15 antiviral mechanism"/>
</dbReference>
<dbReference type="Reactome" id="R-HSA-141444">
    <property type="pathway name" value="Amplification of signal from unattached kinetochores via a MAD2 inhibitory signal"/>
</dbReference>
<dbReference type="Reactome" id="R-HSA-159227">
    <property type="pathway name" value="Transport of the SLBP independent Mature mRNA"/>
</dbReference>
<dbReference type="Reactome" id="R-HSA-159230">
    <property type="pathway name" value="Transport of the SLBP Dependant Mature mRNA"/>
</dbReference>
<dbReference type="Reactome" id="R-HSA-159231">
    <property type="pathway name" value="Transport of Mature mRNA Derived from an Intronless Transcript"/>
</dbReference>
<dbReference type="Reactome" id="R-HSA-159236">
    <property type="pathway name" value="Transport of Mature mRNA derived from an Intron-Containing Transcript"/>
</dbReference>
<dbReference type="Reactome" id="R-HSA-165054">
    <property type="pathway name" value="Rev-mediated nuclear export of HIV RNA"/>
</dbReference>
<dbReference type="Reactome" id="R-HSA-168271">
    <property type="pathway name" value="Transport of Ribonucleoproteins into the Host Nucleus"/>
</dbReference>
<dbReference type="Reactome" id="R-HSA-168276">
    <property type="pathway name" value="NS1 Mediated Effects on Host Pathways"/>
</dbReference>
<dbReference type="Reactome" id="R-HSA-168325">
    <property type="pathway name" value="Viral Messenger RNA Synthesis"/>
</dbReference>
<dbReference type="Reactome" id="R-HSA-168333">
    <property type="pathway name" value="NEP/NS2 Interacts with the Cellular Export Machinery"/>
</dbReference>
<dbReference type="Reactome" id="R-HSA-170822">
    <property type="pathway name" value="Regulation of Glucokinase by Glucokinase Regulatory Protein"/>
</dbReference>
<dbReference type="Reactome" id="R-HSA-180746">
    <property type="pathway name" value="Nuclear import of Rev protein"/>
</dbReference>
<dbReference type="Reactome" id="R-HSA-180910">
    <property type="pathway name" value="Vpr-mediated nuclear import of PICs"/>
</dbReference>
<dbReference type="Reactome" id="R-HSA-191859">
    <property type="pathway name" value="snRNP Assembly"/>
</dbReference>
<dbReference type="Reactome" id="R-HSA-2467813">
    <property type="pathway name" value="Separation of Sister Chromatids"/>
</dbReference>
<dbReference type="Reactome" id="R-HSA-2500257">
    <property type="pathway name" value="Resolution of Sister Chromatid Cohesion"/>
</dbReference>
<dbReference type="Reactome" id="R-HSA-3108214">
    <property type="pathway name" value="SUMOylation of DNA damage response and repair proteins"/>
</dbReference>
<dbReference type="Reactome" id="R-HSA-3232142">
    <property type="pathway name" value="SUMOylation of ubiquitinylation proteins"/>
</dbReference>
<dbReference type="Reactome" id="R-HSA-3301854">
    <property type="pathway name" value="Nuclear Pore Complex (NPC) Disassembly"/>
</dbReference>
<dbReference type="Reactome" id="R-HSA-3371453">
    <property type="pathway name" value="Regulation of HSF1-mediated heat shock response"/>
</dbReference>
<dbReference type="Reactome" id="R-HSA-4085377">
    <property type="pathway name" value="SUMOylation of SUMOylation proteins"/>
</dbReference>
<dbReference type="Reactome" id="R-HSA-4551638">
    <property type="pathway name" value="SUMOylation of chromatin organization proteins"/>
</dbReference>
<dbReference type="Reactome" id="R-HSA-4570464">
    <property type="pathway name" value="SUMOylation of RNA binding proteins"/>
</dbReference>
<dbReference type="Reactome" id="R-HSA-4615885">
    <property type="pathway name" value="SUMOylation of DNA replication proteins"/>
</dbReference>
<dbReference type="Reactome" id="R-HSA-5578749">
    <property type="pathway name" value="Transcriptional regulation by small RNAs"/>
</dbReference>
<dbReference type="Reactome" id="R-HSA-5619107">
    <property type="pathway name" value="Defective TPR may confer susceptibility towards thyroid papillary carcinoma (TPC)"/>
</dbReference>
<dbReference type="Reactome" id="R-HSA-5663220">
    <property type="pathway name" value="RHO GTPases Activate Formins"/>
</dbReference>
<dbReference type="Reactome" id="R-HSA-6784531">
    <property type="pathway name" value="tRNA processing in the nucleus"/>
</dbReference>
<dbReference type="Reactome" id="R-HSA-68877">
    <property type="pathway name" value="Mitotic Prometaphase"/>
</dbReference>
<dbReference type="Reactome" id="R-HSA-9609690">
    <property type="pathway name" value="HCMV Early Events"/>
</dbReference>
<dbReference type="Reactome" id="R-HSA-9610379">
    <property type="pathway name" value="HCMV Late Events"/>
</dbReference>
<dbReference type="Reactome" id="R-HSA-9648025">
    <property type="pathway name" value="EML4 and NUDC in mitotic spindle formation"/>
</dbReference>
<dbReference type="Reactome" id="R-HSA-9705671">
    <property type="pathway name" value="SARS-CoV-2 activates/modulates innate and adaptive immune responses"/>
</dbReference>
<dbReference type="Reactome" id="R-HSA-9725370">
    <property type="pathway name" value="Signaling by ALK fusions and activated point mutants"/>
</dbReference>
<dbReference type="SignaLink" id="P49792"/>
<dbReference type="SIGNOR" id="P49792"/>
<dbReference type="UniPathway" id="UPA00886"/>
<dbReference type="BioGRID-ORCS" id="5903">
    <property type="hits" value="434 hits in 1154 CRISPR screens"/>
</dbReference>
<dbReference type="CD-CODE" id="232F8A39">
    <property type="entry name" value="P-body"/>
</dbReference>
<dbReference type="CD-CODE" id="8C2F96ED">
    <property type="entry name" value="Centrosome"/>
</dbReference>
<dbReference type="CD-CODE" id="D6A53B8E">
    <property type="entry name" value="Nuclear pore complex"/>
</dbReference>
<dbReference type="ChiTaRS" id="RANBP2">
    <property type="organism name" value="human"/>
</dbReference>
<dbReference type="EvolutionaryTrace" id="P49792"/>
<dbReference type="GeneWiki" id="RANBP2"/>
<dbReference type="GenomeRNAi" id="5903"/>
<dbReference type="Pharos" id="P49792">
    <property type="development level" value="Tbio"/>
</dbReference>
<dbReference type="PRO" id="PR:P49792"/>
<dbReference type="Proteomes" id="UP000005640">
    <property type="component" value="Chromosome 2"/>
</dbReference>
<dbReference type="RNAct" id="P49792">
    <property type="molecule type" value="protein"/>
</dbReference>
<dbReference type="Bgee" id="ENSG00000153201">
    <property type="expression patterns" value="Expressed in endothelial cell and 216 other cell types or tissues"/>
</dbReference>
<dbReference type="ExpressionAtlas" id="P49792">
    <property type="expression patterns" value="baseline and differential"/>
</dbReference>
<dbReference type="GO" id="GO:0005642">
    <property type="term" value="C:annulate lamellae"/>
    <property type="evidence" value="ECO:0000314"/>
    <property type="project" value="UniProtKB"/>
</dbReference>
<dbReference type="GO" id="GO:0005737">
    <property type="term" value="C:cytoplasm"/>
    <property type="evidence" value="ECO:0000318"/>
    <property type="project" value="GO_Central"/>
</dbReference>
<dbReference type="GO" id="GO:1990723">
    <property type="term" value="C:cytoplasmic periphery of the nuclear pore complex"/>
    <property type="evidence" value="ECO:0007669"/>
    <property type="project" value="Ensembl"/>
</dbReference>
<dbReference type="GO" id="GO:0005829">
    <property type="term" value="C:cytosol"/>
    <property type="evidence" value="ECO:0000314"/>
    <property type="project" value="HPA"/>
</dbReference>
<dbReference type="GO" id="GO:0043231">
    <property type="term" value="C:intracellular membrane-bounded organelle"/>
    <property type="evidence" value="ECO:0000314"/>
    <property type="project" value="HPA"/>
</dbReference>
<dbReference type="GO" id="GO:0016020">
    <property type="term" value="C:membrane"/>
    <property type="evidence" value="ECO:0007005"/>
    <property type="project" value="UniProtKB"/>
</dbReference>
<dbReference type="GO" id="GO:0005635">
    <property type="term" value="C:nuclear envelope"/>
    <property type="evidence" value="ECO:0000314"/>
    <property type="project" value="UniProtKB"/>
</dbReference>
<dbReference type="GO" id="GO:0042405">
    <property type="term" value="C:nuclear inclusion body"/>
    <property type="evidence" value="ECO:0000314"/>
    <property type="project" value="UniProtKB"/>
</dbReference>
<dbReference type="GO" id="GO:0031965">
    <property type="term" value="C:nuclear membrane"/>
    <property type="evidence" value="ECO:0000314"/>
    <property type="project" value="UniProtKB"/>
</dbReference>
<dbReference type="GO" id="GO:0005643">
    <property type="term" value="C:nuclear pore"/>
    <property type="evidence" value="ECO:0000314"/>
    <property type="project" value="UniProtKB"/>
</dbReference>
<dbReference type="GO" id="GO:0044614">
    <property type="term" value="C:nuclear pore cytoplasmic filaments"/>
    <property type="evidence" value="ECO:0000314"/>
    <property type="project" value="GO_Central"/>
</dbReference>
<dbReference type="GO" id="GO:0044615">
    <property type="term" value="C:nuclear pore nuclear basket"/>
    <property type="evidence" value="ECO:0000314"/>
    <property type="project" value="UniProtKB"/>
</dbReference>
<dbReference type="GO" id="GO:0005654">
    <property type="term" value="C:nucleoplasm"/>
    <property type="evidence" value="ECO:0000314"/>
    <property type="project" value="HPA"/>
</dbReference>
<dbReference type="GO" id="GO:0005634">
    <property type="term" value="C:nucleus"/>
    <property type="evidence" value="ECO:0000314"/>
    <property type="project" value="UniProt"/>
</dbReference>
<dbReference type="GO" id="GO:0106068">
    <property type="term" value="C:SUMO ligase complex"/>
    <property type="evidence" value="ECO:0000353"/>
    <property type="project" value="ComplexPortal"/>
</dbReference>
<dbReference type="GO" id="GO:0019209">
    <property type="term" value="F:kinase activator activity"/>
    <property type="evidence" value="ECO:0007669"/>
    <property type="project" value="Ensembl"/>
</dbReference>
<dbReference type="GO" id="GO:0044877">
    <property type="term" value="F:protein-containing complex binding"/>
    <property type="evidence" value="ECO:0007669"/>
    <property type="project" value="Ensembl"/>
</dbReference>
<dbReference type="GO" id="GO:0003723">
    <property type="term" value="F:RNA binding"/>
    <property type="evidence" value="ECO:0007669"/>
    <property type="project" value="UniProtKB-KW"/>
</dbReference>
<dbReference type="GO" id="GO:0031267">
    <property type="term" value="F:small GTPase binding"/>
    <property type="evidence" value="ECO:0000353"/>
    <property type="project" value="GO_Central"/>
</dbReference>
<dbReference type="GO" id="GO:0061665">
    <property type="term" value="F:SUMO ligase activity"/>
    <property type="evidence" value="ECO:0000314"/>
    <property type="project" value="UniProtKB"/>
</dbReference>
<dbReference type="GO" id="GO:0019789">
    <property type="term" value="F:SUMO transferase activity"/>
    <property type="evidence" value="ECO:0000269"/>
    <property type="project" value="Reactome"/>
</dbReference>
<dbReference type="GO" id="GO:0008270">
    <property type="term" value="F:zinc ion binding"/>
    <property type="evidence" value="ECO:0007669"/>
    <property type="project" value="UniProtKB-KW"/>
</dbReference>
<dbReference type="GO" id="GO:0051642">
    <property type="term" value="P:centrosome localization"/>
    <property type="evidence" value="ECO:0000315"/>
    <property type="project" value="UniProtKB"/>
</dbReference>
<dbReference type="GO" id="GO:0051028">
    <property type="term" value="P:mRNA transport"/>
    <property type="evidence" value="ECO:0007669"/>
    <property type="project" value="UniProtKB-KW"/>
</dbReference>
<dbReference type="GO" id="GO:0006607">
    <property type="term" value="P:NLS-bearing protein import into nucleus"/>
    <property type="evidence" value="ECO:0000315"/>
    <property type="project" value="GO_Central"/>
</dbReference>
<dbReference type="GO" id="GO:0051168">
    <property type="term" value="P:nuclear export"/>
    <property type="evidence" value="ECO:0000269"/>
    <property type="project" value="ComplexPortal"/>
</dbReference>
<dbReference type="GO" id="GO:0006913">
    <property type="term" value="P:nucleocytoplasmic transport"/>
    <property type="evidence" value="ECO:0000303"/>
    <property type="project" value="ComplexPortal"/>
</dbReference>
<dbReference type="GO" id="GO:0006457">
    <property type="term" value="P:protein folding"/>
    <property type="evidence" value="ECO:0007669"/>
    <property type="project" value="InterPro"/>
</dbReference>
<dbReference type="GO" id="GO:0016925">
    <property type="term" value="P:protein sumoylation"/>
    <property type="evidence" value="ECO:0000314"/>
    <property type="project" value="UniProtKB"/>
</dbReference>
<dbReference type="GO" id="GO:0006111">
    <property type="term" value="P:regulation of gluconeogenesis"/>
    <property type="evidence" value="ECO:0007669"/>
    <property type="project" value="Ensembl"/>
</dbReference>
<dbReference type="GO" id="GO:0001975">
    <property type="term" value="P:response to amphetamine"/>
    <property type="evidence" value="ECO:0007669"/>
    <property type="project" value="Ensembl"/>
</dbReference>
<dbReference type="CDD" id="cd01926">
    <property type="entry name" value="cyclophilin_ABH_like"/>
    <property type="match status" value="1"/>
</dbReference>
<dbReference type="CDD" id="cd14684">
    <property type="entry name" value="RanBD1_RanBP2-like"/>
    <property type="match status" value="1"/>
</dbReference>
<dbReference type="CDD" id="cd13177">
    <property type="entry name" value="RanBD2_RanBP2-like"/>
    <property type="match status" value="1"/>
</dbReference>
<dbReference type="CDD" id="cd14685">
    <property type="entry name" value="RanBD3_RanBP2-like"/>
    <property type="match status" value="1"/>
</dbReference>
<dbReference type="CDD" id="cd13178">
    <property type="entry name" value="RanBD4_RanBP2-like"/>
    <property type="match status" value="1"/>
</dbReference>
<dbReference type="FunFam" id="2.30.29.30:FF:000018">
    <property type="entry name" value="E3 SUMO-protein ligase RanBP2"/>
    <property type="match status" value="4"/>
</dbReference>
<dbReference type="FunFam" id="2.40.100.10:FF:000020">
    <property type="entry name" value="E3 SUMO-protein ligase RanBP2"/>
    <property type="match status" value="1"/>
</dbReference>
<dbReference type="FunFam" id="4.10.1060.10:FF:000003">
    <property type="entry name" value="E3 SUMO-protein ligase RanBP2"/>
    <property type="match status" value="7"/>
</dbReference>
<dbReference type="FunFam" id="4.10.1060.10:FF:000018">
    <property type="entry name" value="E3 SUMO-protein ligase RanBP2"/>
    <property type="match status" value="1"/>
</dbReference>
<dbReference type="FunFam" id="1.25.40.10:FF:000114">
    <property type="entry name" value="E3 SUMO-protein ligase RanBP2 isoform X1"/>
    <property type="match status" value="1"/>
</dbReference>
<dbReference type="Gene3D" id="2.40.100.10">
    <property type="entry name" value="Cyclophilin-like"/>
    <property type="match status" value="1"/>
</dbReference>
<dbReference type="Gene3D" id="2.30.29.30">
    <property type="entry name" value="Pleckstrin-homology domain (PH domain)/Phosphotyrosine-binding domain (PTB)"/>
    <property type="match status" value="4"/>
</dbReference>
<dbReference type="Gene3D" id="1.25.40.10">
    <property type="entry name" value="Tetratricopeptide repeat domain"/>
    <property type="match status" value="1"/>
</dbReference>
<dbReference type="Gene3D" id="4.10.1060.10">
    <property type="entry name" value="Zinc finger, RanBP2-type"/>
    <property type="match status" value="8"/>
</dbReference>
<dbReference type="IDEAL" id="IID00151"/>
<dbReference type="InterPro" id="IPR029000">
    <property type="entry name" value="Cyclophilin-like_dom_sf"/>
</dbReference>
<dbReference type="InterPro" id="IPR020892">
    <property type="entry name" value="Cyclophilin-type_PPIase_CS"/>
</dbReference>
<dbReference type="InterPro" id="IPR002130">
    <property type="entry name" value="Cyclophilin-type_PPIase_dom"/>
</dbReference>
<dbReference type="InterPro" id="IPR022011">
    <property type="entry name" value="IR1-M"/>
</dbReference>
<dbReference type="InterPro" id="IPR011993">
    <property type="entry name" value="PH-like_dom_sf"/>
</dbReference>
<dbReference type="InterPro" id="IPR000156">
    <property type="entry name" value="Ran_bind_dom"/>
</dbReference>
<dbReference type="InterPro" id="IPR045255">
    <property type="entry name" value="RanBP1-like"/>
</dbReference>
<dbReference type="InterPro" id="IPR011990">
    <property type="entry name" value="TPR-like_helical_dom_sf"/>
</dbReference>
<dbReference type="InterPro" id="IPR019734">
    <property type="entry name" value="TPR_rpt"/>
</dbReference>
<dbReference type="InterPro" id="IPR001876">
    <property type="entry name" value="Znf_RanBP2"/>
</dbReference>
<dbReference type="InterPro" id="IPR036443">
    <property type="entry name" value="Znf_RanBP2_sf"/>
</dbReference>
<dbReference type="PANTHER" id="PTHR23138:SF87">
    <property type="entry name" value="E3 SUMO-PROTEIN LIGASE RANBP2"/>
    <property type="match status" value="1"/>
</dbReference>
<dbReference type="PANTHER" id="PTHR23138">
    <property type="entry name" value="RAN BINDING PROTEIN"/>
    <property type="match status" value="1"/>
</dbReference>
<dbReference type="Pfam" id="PF12185">
    <property type="entry name" value="IR1-M"/>
    <property type="match status" value="2"/>
</dbReference>
<dbReference type="Pfam" id="PF00160">
    <property type="entry name" value="Pro_isomerase"/>
    <property type="match status" value="1"/>
</dbReference>
<dbReference type="Pfam" id="PF00638">
    <property type="entry name" value="Ran_BP1"/>
    <property type="match status" value="4"/>
</dbReference>
<dbReference type="Pfam" id="PF00641">
    <property type="entry name" value="Zn_ribbon_RanBP"/>
    <property type="match status" value="8"/>
</dbReference>
<dbReference type="PRINTS" id="PR00153">
    <property type="entry name" value="CSAPPISMRASE"/>
</dbReference>
<dbReference type="SMART" id="SM00160">
    <property type="entry name" value="RanBD"/>
    <property type="match status" value="4"/>
</dbReference>
<dbReference type="SMART" id="SM00028">
    <property type="entry name" value="TPR"/>
    <property type="match status" value="1"/>
</dbReference>
<dbReference type="SMART" id="SM00547">
    <property type="entry name" value="ZnF_RBZ"/>
    <property type="match status" value="8"/>
</dbReference>
<dbReference type="SUPFAM" id="SSF50891">
    <property type="entry name" value="Cyclophilin-like"/>
    <property type="match status" value="1"/>
</dbReference>
<dbReference type="SUPFAM" id="SSF50729">
    <property type="entry name" value="PH domain-like"/>
    <property type="match status" value="4"/>
</dbReference>
<dbReference type="SUPFAM" id="SSF90209">
    <property type="entry name" value="Ran binding protein zinc finger-like"/>
    <property type="match status" value="7"/>
</dbReference>
<dbReference type="SUPFAM" id="SSF48452">
    <property type="entry name" value="TPR-like"/>
    <property type="match status" value="1"/>
</dbReference>
<dbReference type="PROSITE" id="PS00170">
    <property type="entry name" value="CSA_PPIASE_1"/>
    <property type="match status" value="1"/>
</dbReference>
<dbReference type="PROSITE" id="PS50072">
    <property type="entry name" value="CSA_PPIASE_2"/>
    <property type="match status" value="1"/>
</dbReference>
<dbReference type="PROSITE" id="PS50196">
    <property type="entry name" value="RANBD1"/>
    <property type="match status" value="4"/>
</dbReference>
<dbReference type="PROSITE" id="PS50005">
    <property type="entry name" value="TPR"/>
    <property type="match status" value="1"/>
</dbReference>
<dbReference type="PROSITE" id="PS50293">
    <property type="entry name" value="TPR_REGION"/>
    <property type="match status" value="1"/>
</dbReference>
<dbReference type="PROSITE" id="PS01358">
    <property type="entry name" value="ZF_RANBP2_1"/>
    <property type="match status" value="8"/>
</dbReference>
<dbReference type="PROSITE" id="PS50199">
    <property type="entry name" value="ZF_RANBP2_2"/>
    <property type="match status" value="8"/>
</dbReference>
<comment type="function">
    <text evidence="8 10 12 16 20 21 22 23 24 27 31 32">E3 SUMO-protein ligase which facilitates SUMO1 and SUMO2 conjugation by UBE2I (PubMed:11792325, PubMed:12032081, PubMed:15378033, PubMed:15931224, PubMed:22194619). Involved in transport factor (Ran-GTP, karyopherin)-mediated protein import via the F-G repeat-containing domain which acts as a docking site for substrates (PubMed:7775481). Binds single-stranded RNA (in vitro) (PubMed:7775481). May bind DNA (PubMed:7775481). Component of the nuclear export pathway (PubMed:10078529). Specific docking site for the nuclear export factor exportin-1 (PubMed:10078529). Inhibits EIF4E-dependent mRNA export (PubMed:22902403). Sumoylates PML at 'Lys-490' which is essential for the proper assembly of PML-NB (PubMed:22155184). Recruits BICD2 to the nuclear envelope and cytoplasmic stacks of nuclear pore complex known as annulate lamellae during G2 phase of cell cycle (PubMed:20386726). Probable inactive PPIase with no peptidyl-prolyl cis-trans isomerase activity (PubMed:20676357, PubMed:23353830).</text>
</comment>
<comment type="pathway">
    <text>Protein modification; protein sumoylation.</text>
</comment>
<comment type="subunit">
    <text evidence="1 7 9 11 12 13 15 17 19 20 22 27 29 30">Part of the nuclear pore complex (PubMed:11839768, PubMed:20386726, PubMed:23353830, PubMed:7603572). Forms a complex with NXT1, NXF1 and RANGAP1 (PubMed:14729961). Forms a tight complex with RANBP1 and UBE2I (PubMed:10078529, PubMed:15388847, PubMed:15826666). Interacts with SUMO1 but not SUMO2 (PubMed:10078529, PubMed:15388847, PubMed:15826666). Interacts with PRKN (PubMed:16332688). Interacts with sumoylated RANGAP1 (PubMed:10078529, PubMed:15378033, PubMed:15826666). Interacts with CDCA8 (PubMed:19413330). Interacts with PML (isoform PML-4) (PubMed:22155184). Interacts with BICD2 (PubMed:20386726). Interacts with MCM3AP isoform GANP (PubMed:20005110). Interacts with COX11 (PubMed:34400285). Interacts with synaptic plasticity regulator PANTS (By similarity).</text>
</comment>
<comment type="subunit">
    <text evidence="28">(Microbial infection) Interacts with HIV-1 Vpu protein; this interaction allows Vpu to down-regulate BLM sumoylation.</text>
</comment>
<comment type="interaction">
    <interactant intactId="EBI-973138">
        <id>P49792</id>
    </interactant>
    <interactant intactId="EBI-2372628">
        <id>Q8TD16</id>
        <label>BICD2</label>
    </interactant>
    <organismsDiffer>false</organismsDiffer>
    <experiments>2</experiments>
</comment>
<comment type="interaction">
    <interactant intactId="EBI-973138">
        <id>P49792</id>
    </interactant>
    <interactant intactId="EBI-718586">
        <id>Q9BPX7</id>
        <label>C7orf25</label>
    </interactant>
    <organismsDiffer>false</organismsDiffer>
    <experiments>3</experiments>
</comment>
<comment type="interaction">
    <interactant intactId="EBI-973138">
        <id>P49792</id>
    </interactant>
    <interactant intactId="EBI-641062">
        <id>P04626</id>
        <label>ERBB2</label>
    </interactant>
    <organismsDiffer>false</organismsDiffer>
    <experiments>3</experiments>
</comment>
<comment type="interaction">
    <interactant intactId="EBI-973138">
        <id>P49792</id>
    </interactant>
    <interactant intactId="EBI-5658852">
        <id>Q53GG5</id>
        <label>PDLIM3</label>
    </interactant>
    <organismsDiffer>false</organismsDiffer>
    <experiments>3</experiments>
</comment>
<comment type="interaction">
    <interactant intactId="EBI-973138">
        <id>P49792</id>
    </interactant>
    <interactant intactId="EBI-716346">
        <id>O60260</id>
        <label>PRKN</label>
    </interactant>
    <organismsDiffer>false</organismsDiffer>
    <experiments>11</experiments>
</comment>
<comment type="interaction">
    <interactant intactId="EBI-973138">
        <id>P49792</id>
    </interactant>
    <interactant intactId="EBI-286642">
        <id>P62826</id>
        <label>RAN</label>
    </interactant>
    <organismsDiffer>false</organismsDiffer>
    <experiments>7</experiments>
</comment>
<comment type="interaction">
    <interactant intactId="EBI-973138">
        <id>P49792</id>
    </interactant>
    <interactant intactId="EBI-396091">
        <id>P46060</id>
        <label>RANGAP1</label>
    </interactant>
    <organismsDiffer>false</organismsDiffer>
    <experiments>5</experiments>
</comment>
<comment type="interaction">
    <interactant intactId="EBI-973138">
        <id>P49792</id>
    </interactant>
    <interactant intactId="EBI-80168">
        <id>P63279</id>
        <label>UBE2I</label>
    </interactant>
    <organismsDiffer>false</organismsDiffer>
    <experiments>6</experiments>
</comment>
<comment type="interaction">
    <interactant intactId="EBI-973138">
        <id>P49792</id>
    </interactant>
    <interactant intactId="EBI-642995">
        <id>Q921C5-1</id>
        <label>Bicd2</label>
    </interactant>
    <organismsDiffer>true</organismsDiffer>
    <experiments>4</experiments>
</comment>
<comment type="subcellular location">
    <subcellularLocation>
        <location evidence="31">Nucleus</location>
    </subcellularLocation>
    <subcellularLocation>
        <location evidence="9">Nucleus membrane</location>
    </subcellularLocation>
    <subcellularLocation>
        <location evidence="9 20 27 30">Nucleus</location>
        <location evidence="9 20 27 30">Nuclear pore complex</location>
    </subcellularLocation>
    <subcellularLocation>
        <location evidence="20">Nucleus envelope</location>
    </subcellularLocation>
    <text evidence="9 31">Detected in diffuse and discrete intranuclear foci (PubMed:11839768). Cytoplasmic filaments (PubMed:7775481).</text>
</comment>
<comment type="domain">
    <text evidence="33">Contains FG repeats. FG repeats are interaction sites for karyopherins (importins, exportins) and form probably an affinity gradient, guiding the transport proteins unidirectionally with their cargo through the NPC. FG repeat regions are highly flexible and lack ordered secondary structure. The overall conservation of FG repeats regarding exact sequence, spacing, and repeat unit length is limited.</text>
</comment>
<comment type="domain">
    <text evidence="27">The PPIase cyclophilin-type domain has high structural similarity with PPIA, but has extremely low and barely detectable proline isomerase activity (in vitro) (PubMed:23353830). Only about half of the residues that surround the PPIA active site cleft are conserved.</text>
</comment>
<comment type="PTM">
    <text evidence="17">Polyubiquitinated by PRKN, which leads to proteasomal degradation.</text>
</comment>
<comment type="PTM">
    <text evidence="1">The inner channel of the NPC has a different redox environment from the cytoplasm and allows the formation of interchain disulfide bonds between some nucleoporins, the significant increase of these linkages upon oxidative stress reduces the permeability of the NPC.</text>
</comment>
<comment type="disease" evidence="18 29">
    <disease id="DI-01172">
        <name>Encephalopathy, acute, infection-induced, 3</name>
        <acronym>IIAE3</acronym>
        <description>A rapidly progressive encephalopathy manifesting in susceptible individuals with seizures and coma. It can occur within days in otherwise healthy children after common viral infections such as influenza and parainfluenza, without evidence of viral infection of the brain or inflammatory cell infiltration. Brain T2-weighted magnetic resonance imaging reveals characteristic symmetric lesions present in the thalami, pons and brainstem.</description>
        <dbReference type="MIM" id="608033"/>
    </disease>
    <text evidence="18">The disease is caused by variants affecting the gene represented in this entry. Mutations in the RANBP2 gene predispose to IIAE3, but by themselves are insufficient to make the phenotype fully penetrant; additional genetic and environmental factors are required (PubMed:19118815).</text>
</comment>
<comment type="disease">
    <text evidence="26">A chromosomal aberration involving RANBP2 is a cause of chromosome 8p11 myeloproliferative syndrome. Translocation t(2;8)(q12;p11) with FGFR1. Chromosome 8p11 myeloproliferative syndrome is characterized by myeloid hyperplasia, eosinophilia and T-cell or B-cell lymphoblastic lymphoma. In general it progresses to acute myeloid leukemia.</text>
</comment>
<comment type="similarity">
    <text evidence="33">Belongs to the RanBP2 E3 ligase family.</text>
</comment>
<comment type="caution">
    <text evidence="21 27">Despite the presence of a PPIase cyclophilin-type domain, it has probably no peptidyl-prolyl cis-trans isomerase activity.</text>
</comment>
<comment type="online information" name="Atlas of Genetics and Cytogenetics in Oncology and Haematology">
    <link uri="https://atlasgeneticsoncology.org/gene/483/RANBP2"/>
</comment>
<feature type="chain" id="PRO_0000204913" description="E3 SUMO-protein ligase RanBP2">
    <location>
        <begin position="1"/>
        <end position="3224"/>
    </location>
</feature>
<feature type="repeat" description="TPR 1" evidence="5 25">
    <location>
        <begin position="26"/>
        <end position="59"/>
    </location>
</feature>
<feature type="repeat" description="TPR 2" evidence="5 25">
    <location>
        <begin position="60"/>
        <end position="93"/>
    </location>
</feature>
<feature type="repeat" description="TPR 3" evidence="5 25">
    <location>
        <begin position="94"/>
        <end position="128"/>
    </location>
</feature>
<feature type="repeat" description="TPR 4" evidence="5 25">
    <location>
        <begin position="165"/>
        <end position="201"/>
    </location>
</feature>
<feature type="repeat" description="TPR 5" evidence="5 25">
    <location>
        <begin position="287"/>
        <end position="319"/>
    </location>
</feature>
<feature type="repeat" description="TPR 6" evidence="5 25">
    <location>
        <begin position="583"/>
        <end position="616"/>
    </location>
</feature>
<feature type="repeat" description="TPR 7" evidence="5 25">
    <location>
        <begin position="648"/>
        <end position="681"/>
    </location>
</feature>
<feature type="repeat" description="1" evidence="33">
    <location>
        <begin position="1001"/>
        <end position="1002"/>
    </location>
</feature>
<feature type="repeat" description="2" evidence="33">
    <location>
        <begin position="1101"/>
        <end position="1102"/>
    </location>
</feature>
<feature type="repeat" description="3" evidence="33">
    <location>
        <begin position="1142"/>
        <end position="1143"/>
    </location>
</feature>
<feature type="domain" description="RanBD1 1" evidence="3">
    <location>
        <begin position="1171"/>
        <end position="1307"/>
    </location>
</feature>
<feature type="repeat" description="4" evidence="33">
    <location>
        <begin position="1459"/>
        <end position="1460"/>
    </location>
</feature>
<feature type="repeat" description="5" evidence="33">
    <location>
        <begin position="1523"/>
        <end position="1524"/>
    </location>
</feature>
<feature type="repeat" description="6" evidence="33">
    <location>
        <begin position="1586"/>
        <end position="1587"/>
    </location>
</feature>
<feature type="repeat" description="7" evidence="33">
    <location>
        <begin position="1852"/>
        <end position="1853"/>
    </location>
</feature>
<feature type="repeat" description="8" evidence="33">
    <location>
        <begin position="1861"/>
        <end position="1862"/>
    </location>
</feature>
<feature type="repeat" description="9" evidence="33">
    <location>
        <begin position="1900"/>
        <end position="1901"/>
    </location>
</feature>
<feature type="repeat" description="10" evidence="33">
    <location>
        <begin position="1938"/>
        <end position="1939"/>
    </location>
</feature>
<feature type="repeat" description="11" evidence="33">
    <location>
        <begin position="1961"/>
        <end position="1962"/>
    </location>
</feature>
<feature type="domain" description="RanBD1 2" evidence="3">
    <location>
        <begin position="2012"/>
        <end position="2148"/>
    </location>
</feature>
<feature type="repeat" description="12" evidence="33">
    <location>
        <begin position="2260"/>
        <end position="2261"/>
    </location>
</feature>
<feature type="domain" description="RanBD1 3" evidence="3">
    <location>
        <begin position="2309"/>
        <end position="2445"/>
    </location>
</feature>
<feature type="repeat" description="13" evidence="33">
    <location>
        <begin position="2516"/>
        <end position="2517"/>
    </location>
</feature>
<feature type="repeat" description="14" evidence="33">
    <location>
        <begin position="2535"/>
        <end position="2536"/>
    </location>
</feature>
<feature type="repeat" description="15" evidence="33">
    <location>
        <begin position="2545"/>
        <end position="2546"/>
    </location>
</feature>
<feature type="repeat" description="1" evidence="25">
    <location>
        <begin position="2633"/>
        <end position="2685"/>
    </location>
</feature>
<feature type="repeat" description="2" evidence="25">
    <location>
        <begin position="2711"/>
        <end position="2761"/>
    </location>
</feature>
<feature type="repeat" description="16" evidence="33">
    <location>
        <begin position="2840"/>
        <end position="2841"/>
    </location>
</feature>
<feature type="repeat" description="17" evidence="33">
    <location>
        <begin position="2842"/>
        <end position="2843"/>
    </location>
</feature>
<feature type="repeat" description="18" evidence="33">
    <location>
        <begin position="2863"/>
        <end position="2864"/>
    </location>
</feature>
<feature type="repeat" description="19" evidence="33">
    <location>
        <begin position="2880"/>
        <end position="2881"/>
    </location>
</feature>
<feature type="domain" description="RanBD1 4" evidence="3">
    <location>
        <begin position="2911"/>
        <end position="3046"/>
    </location>
</feature>
<feature type="domain" description="PPIase cyclophilin-type" evidence="2">
    <location>
        <begin position="3067"/>
        <end position="3223"/>
    </location>
</feature>
<feature type="repeat" description="20" evidence="33">
    <location>
        <begin position="3106"/>
        <end position="3107"/>
    </location>
</feature>
<feature type="repeat" description="21" evidence="33">
    <location>
        <begin position="3189"/>
        <end position="3190"/>
    </location>
</feature>
<feature type="repeat" description="22" evidence="33">
    <location>
        <begin position="3205"/>
        <end position="3206"/>
    </location>
</feature>
<feature type="zinc finger region" description="RanBP2-type 1" evidence="4">
    <location>
        <begin position="1351"/>
        <end position="1381"/>
    </location>
</feature>
<feature type="zinc finger region" description="RanBP2-type 2" evidence="4">
    <location>
        <begin position="1415"/>
        <end position="1444"/>
    </location>
</feature>
<feature type="zinc finger region" description="RanBP2-type 3" evidence="4">
    <location>
        <begin position="1479"/>
        <end position="1508"/>
    </location>
</feature>
<feature type="zinc finger region" description="RanBP2-type 4" evidence="4">
    <location>
        <begin position="1543"/>
        <end position="1572"/>
    </location>
</feature>
<feature type="zinc finger region" description="RanBP2-type 5" evidence="4">
    <location>
        <begin position="1606"/>
        <end position="1635"/>
    </location>
</feature>
<feature type="zinc finger region" description="RanBP2-type 6" evidence="4">
    <location>
        <begin position="1665"/>
        <end position="1694"/>
    </location>
</feature>
<feature type="zinc finger region" description="RanBP2-type 7" evidence="4">
    <location>
        <begin position="1724"/>
        <end position="1753"/>
    </location>
</feature>
<feature type="zinc finger region" description="RanBP2-type 8" evidence="4">
    <location>
        <begin position="1781"/>
        <end position="1810"/>
    </location>
</feature>
<feature type="region of interest" description="Disordered" evidence="6">
    <location>
        <begin position="760"/>
        <end position="802"/>
    </location>
</feature>
<feature type="region of interest" description="22 X 2 AA repeats of F-G" evidence="33">
    <location>
        <begin position="1001"/>
        <end position="3206"/>
    </location>
</feature>
<feature type="region of interest" description="Disordered" evidence="6">
    <location>
        <begin position="1138"/>
        <end position="1174"/>
    </location>
</feature>
<feature type="region of interest" description="Disordered" evidence="6">
    <location>
        <begin position="1569"/>
        <end position="1595"/>
    </location>
</feature>
<feature type="region of interest" description="Disordered" evidence="6">
    <location>
        <begin position="1633"/>
        <end position="1657"/>
    </location>
</feature>
<feature type="region of interest" description="Disordered" evidence="6">
    <location>
        <begin position="1692"/>
        <end position="1716"/>
    </location>
</feature>
<feature type="region of interest" description="Disordered" evidence="6">
    <location>
        <begin position="1903"/>
        <end position="1928"/>
    </location>
</feature>
<feature type="region of interest" description="Interaction with BICD2" evidence="20">
    <location>
        <begin position="2147"/>
        <end position="2287"/>
    </location>
</feature>
<feature type="region of interest" description="Disordered" evidence="6">
    <location>
        <begin position="2188"/>
        <end position="2224"/>
    </location>
</feature>
<feature type="region of interest" description="Disordered" evidence="6">
    <location>
        <begin position="2273"/>
        <end position="2307"/>
    </location>
</feature>
<feature type="region of interest" description="Disordered" evidence="6">
    <location>
        <begin position="2486"/>
        <end position="2509"/>
    </location>
</feature>
<feature type="region of interest" description="Disordered" evidence="6">
    <location>
        <begin position="2556"/>
        <end position="2584"/>
    </location>
</feature>
<feature type="region of interest" description="Interaction with sumoylated RANGAP1">
    <location>
        <begin position="2631"/>
        <end position="2635"/>
    </location>
</feature>
<feature type="region of interest" description="2 X 50 AA approximate repeats">
    <location>
        <begin position="2633"/>
        <end position="2761"/>
    </location>
</feature>
<feature type="region of interest" description="Required for E3 SUMO-ligase activity">
    <location>
        <begin position="2633"/>
        <end position="2710"/>
    </location>
</feature>
<feature type="region of interest" description="Interaction with UBE2I">
    <location>
        <begin position="2633"/>
        <end position="2685"/>
    </location>
</feature>
<feature type="region of interest" description="Interaction with SUMO1" evidence="14">
    <location>
        <begin position="2686"/>
        <end position="2761"/>
    </location>
</feature>
<feature type="region of interest" description="Disordered" evidence="6">
    <location>
        <begin position="2793"/>
        <end position="2818"/>
    </location>
</feature>
<feature type="compositionally biased region" description="Low complexity" evidence="6">
    <location>
        <begin position="785"/>
        <end position="797"/>
    </location>
</feature>
<feature type="compositionally biased region" description="Low complexity" evidence="6">
    <location>
        <begin position="1573"/>
        <end position="1583"/>
    </location>
</feature>
<feature type="compositionally biased region" description="Polar residues" evidence="6">
    <location>
        <begin position="1633"/>
        <end position="1653"/>
    </location>
</feature>
<feature type="compositionally biased region" description="Polar residues" evidence="6">
    <location>
        <begin position="1692"/>
        <end position="1712"/>
    </location>
</feature>
<feature type="compositionally biased region" description="Basic and acidic residues" evidence="6">
    <location>
        <begin position="1907"/>
        <end position="1916"/>
    </location>
</feature>
<feature type="compositionally biased region" description="Polar residues" evidence="6">
    <location>
        <begin position="2211"/>
        <end position="2220"/>
    </location>
</feature>
<feature type="compositionally biased region" description="Low complexity" evidence="6">
    <location>
        <begin position="2273"/>
        <end position="2284"/>
    </location>
</feature>
<feature type="compositionally biased region" description="Acidic residues" evidence="6">
    <location>
        <begin position="2293"/>
        <end position="2305"/>
    </location>
</feature>
<feature type="compositionally biased region" description="Low complexity" evidence="6">
    <location>
        <begin position="2492"/>
        <end position="2504"/>
    </location>
</feature>
<feature type="compositionally biased region" description="Polar residues" evidence="6">
    <location>
        <begin position="2556"/>
        <end position="2569"/>
    </location>
</feature>
<feature type="compositionally biased region" description="Basic and acidic residues" evidence="6">
    <location>
        <begin position="2570"/>
        <end position="2584"/>
    </location>
</feature>
<feature type="compositionally biased region" description="Low complexity" evidence="6">
    <location>
        <begin position="2799"/>
        <end position="2810"/>
    </location>
</feature>
<feature type="site" description="Breakpoint for translocation to form RANBP2-FGFR1 protein" evidence="26">
    <location>
        <begin position="932"/>
        <end position="933"/>
    </location>
</feature>
<feature type="modified residue" description="Phosphothreonine" evidence="35 36 37">
    <location>
        <position position="19"/>
    </location>
</feature>
<feature type="modified residue" description="Phosphoserine" evidence="34 35 36 37 39">
    <location>
        <position position="21"/>
    </location>
</feature>
<feature type="modified residue" description="Phosphothreonine" evidence="39">
    <location>
        <position position="779"/>
    </location>
</feature>
<feature type="modified residue" description="Phosphoserine" evidence="35 37 39">
    <location>
        <position position="781"/>
    </location>
</feature>
<feature type="modified residue" description="Phosphoserine" evidence="1">
    <location>
        <position position="788"/>
    </location>
</feature>
<feature type="modified residue" description="Phosphoserine" evidence="37">
    <location>
        <position position="837"/>
    </location>
</feature>
<feature type="modified residue" description="Asymmetric dimethylarginine" evidence="40">
    <location>
        <position position="945"/>
    </location>
</feature>
<feature type="modified residue" description="Phosphoserine" evidence="35 37 39">
    <location>
        <position position="948"/>
    </location>
</feature>
<feature type="modified residue" description="Phosphoserine" evidence="35 36 37 39 41">
    <location>
        <position position="955"/>
    </location>
</feature>
<feature type="modified residue" description="Asymmetric dimethylarginine; alternate" evidence="1">
    <location>
        <position position="1016"/>
    </location>
</feature>
<feature type="modified residue" description="Omega-N-methylarginine; alternate" evidence="40">
    <location>
        <position position="1016"/>
    </location>
</feature>
<feature type="modified residue" description="Phosphothreonine" evidence="39">
    <location>
        <position position="1098"/>
    </location>
</feature>
<feature type="modified residue" description="Phosphoserine" evidence="39">
    <location>
        <position position="1103"/>
    </location>
</feature>
<feature type="modified residue" description="Phosphoserine" evidence="36 39">
    <location>
        <position position="1107"/>
    </location>
</feature>
<feature type="modified residue" description="Phosphoserine" evidence="35 37 39">
    <location>
        <position position="1110"/>
    </location>
</feature>
<feature type="modified residue" description="Phosphothreonine" evidence="34 35 39">
    <location>
        <position position="1144"/>
    </location>
</feature>
<feature type="modified residue" description="Phosphoserine" evidence="35 37 38 39 41">
    <location>
        <position position="1160"/>
    </location>
</feature>
<feature type="modified residue" description="Phosphoserine" evidence="39">
    <location>
        <position position="1249"/>
    </location>
</feature>
<feature type="modified residue" description="Phosphothreonine" evidence="35 36 39">
    <location>
        <position position="1396"/>
    </location>
</feature>
<feature type="modified residue" description="Phosphothreonine" evidence="37 39">
    <location>
        <position position="1412"/>
    </location>
</feature>
<feature type="modified residue" description="Phosphoserine" evidence="35">
    <location>
        <position position="1443"/>
    </location>
</feature>
<feature type="modified residue" description="Phosphoserine" evidence="39 41">
    <location>
        <position position="1450"/>
    </location>
</feature>
<feature type="modified residue" description="Phosphoserine" evidence="35 38 39 41">
    <location>
        <position position="1456"/>
    </location>
</feature>
<feature type="modified residue" description="Phosphoserine" evidence="35 37 39 41">
    <location>
        <position position="1509"/>
    </location>
</feature>
<feature type="modified residue" description="Phosphoserine" evidence="39">
    <location>
        <position position="1520"/>
    </location>
</feature>
<feature type="modified residue" description="Phosphoserine" evidence="35 39">
    <location>
        <position position="1573"/>
    </location>
</feature>
<feature type="modified residue" description="Phosphoserine" evidence="39">
    <location>
        <position position="1833"/>
    </location>
</feature>
<feature type="modified residue" description="Phosphoserine" evidence="37 39">
    <location>
        <position position="1835"/>
    </location>
</feature>
<feature type="modified residue" description="Phosphoserine" evidence="35 39">
    <location>
        <position position="1869"/>
    </location>
</feature>
<feature type="modified residue" description="Phosphoserine" evidence="36">
    <location>
        <position position="1871"/>
    </location>
</feature>
<feature type="modified residue" description="N6-acetyllysine" evidence="1">
    <location>
        <position position="1977"/>
    </location>
</feature>
<feature type="modified residue" description="Phosphothreonine" evidence="1">
    <location>
        <position position="2005"/>
    </location>
</feature>
<feature type="modified residue" description="Phosphoserine" evidence="1">
    <location>
        <position position="2008"/>
    </location>
</feature>
<feature type="modified residue" description="Phosphothreonine" evidence="1">
    <location>
        <position position="2153"/>
    </location>
</feature>
<feature type="modified residue" description="Phosphoserine" evidence="1">
    <location>
        <position position="2246"/>
    </location>
</feature>
<feature type="modified residue" description="Phosphoserine" evidence="1">
    <location>
        <position position="2251"/>
    </location>
</feature>
<feature type="modified residue" description="Phosphoserine" evidence="35 36 39">
    <location>
        <position position="2270"/>
    </location>
</feature>
<feature type="modified residue" description="Phosphoserine" evidence="1">
    <location>
        <position position="2280"/>
    </location>
</feature>
<feature type="modified residue" description="Phosphoserine" evidence="1">
    <location>
        <position position="2290"/>
    </location>
</feature>
<feature type="modified residue" description="Phosphothreonine" evidence="1">
    <location>
        <position position="2293"/>
    </location>
</feature>
<feature type="modified residue" description="Phosphoserine" evidence="1">
    <location>
        <position position="2297"/>
    </location>
</feature>
<feature type="modified residue" description="Phosphoserine" evidence="1">
    <location>
        <position position="2462"/>
    </location>
</feature>
<feature type="modified residue" description="Phosphoserine" evidence="1">
    <location>
        <position position="2493"/>
    </location>
</feature>
<feature type="modified residue" description="Phosphoserine" evidence="1">
    <location>
        <position position="2510"/>
    </location>
</feature>
<feature type="modified residue" description="Phosphoserine" evidence="39">
    <location>
        <position position="2526"/>
    </location>
</feature>
<feature type="modified residue" description="Phosphothreonine" evidence="35 39">
    <location>
        <position position="2613"/>
    </location>
</feature>
<feature type="modified residue" description="Phosphotyrosine" evidence="39">
    <location>
        <position position="2666"/>
    </location>
</feature>
<feature type="modified residue" description="Phosphoserine" evidence="35 36 38 39 41">
    <location>
        <position position="2668"/>
    </location>
</feature>
<feature type="modified residue" description="Phosphoserine" evidence="35">
    <location>
        <position position="2741"/>
    </location>
</feature>
<feature type="modified residue" description="Phosphothreonine" evidence="35">
    <location>
        <position position="2743"/>
    </location>
</feature>
<feature type="modified residue" description="Phosphoserine" evidence="39">
    <location>
        <position position="2805"/>
    </location>
</feature>
<feature type="modified residue" description="Phosphoserine" evidence="35 36 37 38 41">
    <location>
        <position position="2900"/>
    </location>
</feature>
<feature type="modified residue" description="Phosphoserine" evidence="37 38 39">
    <location>
        <position position="3207"/>
    </location>
</feature>
<feature type="cross-link" description="Glycyl lysine isopeptide (Lys-Gly) (interchain with G-Cter in SUMO2)" evidence="46">
    <location>
        <position position="1350"/>
    </location>
</feature>
<feature type="cross-link" description="Glycyl lysine isopeptide (Lys-Gly) (interchain with G-Cter in SUMO2)" evidence="43 44 45 46">
    <location>
        <position position="1414"/>
    </location>
</feature>
<feature type="cross-link" description="Glycyl lysine isopeptide (Lys-Gly) (interchain with G-Cter in SUMO2)" evidence="46">
    <location>
        <position position="1596"/>
    </location>
</feature>
<feature type="cross-link" description="Glycyl lysine isopeptide (Lys-Gly) (interchain with G-Cter in SUMO1); alternate" evidence="42">
    <location>
        <position position="1605"/>
    </location>
</feature>
<feature type="cross-link" description="Glycyl lysine isopeptide (Lys-Gly) (interchain with G-Cter in SUMO2); alternate" evidence="44 46">
    <location>
        <position position="1605"/>
    </location>
</feature>
<feature type="cross-link" description="Glycyl lysine isopeptide (Lys-Gly) (interchain with G-Cter in SUMO2)" evidence="46">
    <location>
        <position position="1655"/>
    </location>
</feature>
<feature type="cross-link" description="Glycyl lysine isopeptide (Lys-Gly) (interchain with G-Cter in SUMO1); alternate" evidence="42">
    <location>
        <position position="1664"/>
    </location>
</feature>
<feature type="cross-link" description="Glycyl lysine isopeptide (Lys-Gly) (interchain with G-Cter in SUMO2); alternate" evidence="44 46">
    <location>
        <position position="1664"/>
    </location>
</feature>
<feature type="cross-link" description="Glycyl lysine isopeptide (Lys-Gly) (interchain with G-Cter in SUMO2)" evidence="46">
    <location>
        <position position="1714"/>
    </location>
</feature>
<feature type="cross-link" description="Glycyl lysine isopeptide (Lys-Gly) (interchain with G-Cter in SUMO1); alternate" evidence="42">
    <location>
        <position position="1723"/>
    </location>
</feature>
<feature type="cross-link" description="Glycyl lysine isopeptide (Lys-Gly) (interchain with G-Cter in SUMO2); alternate" evidence="44 46">
    <location>
        <position position="1723"/>
    </location>
</feature>
<feature type="cross-link" description="Glycyl lysine isopeptide (Lys-Gly) (interchain with G-Cter in SUMO2)" evidence="46">
    <location>
        <position position="2022"/>
    </location>
</feature>
<feature type="cross-link" description="Glycyl lysine isopeptide (Lys-Gly) (interchain with G-Cter in SUMO2)" evidence="46">
    <location>
        <position position="2522"/>
    </location>
</feature>
<feature type="cross-link" description="Glycyl lysine isopeptide (Lys-Gly) (interchain with G-Cter in SUMO)" evidence="12">
    <location>
        <position position="2592"/>
    </location>
</feature>
<feature type="cross-link" description="Glycyl lysine isopeptide (Lys-Gly) (interchain with G-Cter in SUMO1); alternate" evidence="42">
    <location>
        <position position="2594"/>
    </location>
</feature>
<feature type="cross-link" description="Glycyl lysine isopeptide (Lys-Gly) (interchain with G-Cter in SUMO2); alternate" evidence="46">
    <location>
        <position position="2594"/>
    </location>
</feature>
<feature type="cross-link" description="Glycyl lysine isopeptide (Lys-Gly) (interchain with G-Cter in SUMO2)" evidence="46">
    <location>
        <position position="2612"/>
    </location>
</feature>
<feature type="cross-link" description="Glycyl lysine isopeptide (Lys-Gly) (interchain with G-Cter in SUMO2)" evidence="42 46">
    <location>
        <position position="2792"/>
    </location>
</feature>
<feature type="cross-link" description="Glycyl lysine isopeptide (Lys-Gly) (interchain with G-Cter in SUMO2)" evidence="46">
    <location>
        <position position="2815"/>
    </location>
</feature>
<feature type="sequence variant" id="VAR_029765" description="In dbSNP:rs1057954.">
    <original>V</original>
    <variation>L</variation>
    <location>
        <position position="548"/>
    </location>
</feature>
<feature type="sequence variant" id="VAR_029766" description="In dbSNP:rs1057956.">
    <original>E</original>
    <variation>K</variation>
    <location>
        <position position="580"/>
    </location>
</feature>
<feature type="sequence variant" id="VAR_029767" description="In dbSNP:rs1057957.">
    <original>C</original>
    <variation>Y</variation>
    <location>
        <position position="581"/>
    </location>
</feature>
<feature type="sequence variant" id="VAR_054997" description="In IIAE3; decreased interaction with COX11; dbSNP:rs121434502." evidence="18 29">
    <original>T</original>
    <variation>M</variation>
    <location>
        <position position="585"/>
    </location>
</feature>
<feature type="sequence variant" id="VAR_054998" description="In IIAE3; dbSNP:rs121434503." evidence="18">
    <original>T</original>
    <variation>I</variation>
    <location>
        <position position="653"/>
    </location>
</feature>
<feature type="sequence variant" id="VAR_054999" description="In IIAE3; dbSNP:rs121434504." evidence="18">
    <original>I</original>
    <variation>V</variation>
    <location>
        <position position="656"/>
    </location>
</feature>
<feature type="sequence variant" id="VAR_050575" description="In dbSNP:rs17414315.">
    <original>S</original>
    <variation>G</variation>
    <location>
        <position position="725"/>
    </location>
</feature>
<feature type="sequence variant" id="VAR_023939" description="In dbSNP:rs2912838." evidence="30">
    <original>R</original>
    <variation>K</variation>
    <location>
        <position position="784"/>
    </location>
</feature>
<feature type="sequence variant" id="VAR_029768" description="In dbSNP:rs2889846.">
    <original>P</original>
    <variation>L</variation>
    <location>
        <position position="1870"/>
    </location>
</feature>
<feature type="sequence variant" id="VAR_014886" description="In dbSNP:rs12770.">
    <original>P</original>
    <variation>A</variation>
    <location>
        <position position="1892"/>
    </location>
</feature>
<feature type="sequence variant" id="VAR_050576" description="In dbSNP:rs1677107728.">
    <original>P</original>
    <variation>R</variation>
    <location>
        <position position="1892"/>
    </location>
</feature>
<feature type="mutagenesis site" description="Abolishes interaction with sumoylated RANGAP1." evidence="13">
    <original>V</original>
    <variation>K</variation>
    <location>
        <position position="2632"/>
    </location>
</feature>
<feature type="mutagenesis site" description="Abolishes interaction with sumoylated RANGAP1." evidence="13">
    <original>I</original>
    <variation>K</variation>
    <location>
        <position position="2634"/>
    </location>
</feature>
<feature type="mutagenesis site" description="Abolishes interaction with sumoylated RANGAP1." evidence="13">
    <original>V</original>
    <variation>K</variation>
    <location>
        <position position="2635"/>
    </location>
</feature>
<feature type="mutagenesis site" description="No effect on SUMO E3 ligase activity." evidence="12">
    <original>P</original>
    <variation>A</variation>
    <location>
        <position position="2640"/>
    </location>
</feature>
<feature type="mutagenesis site" description="No effect on SUMO E3 ligase activity." evidence="12">
    <original>K</original>
    <variation>A</variation>
    <location>
        <position position="2645"/>
    </location>
</feature>
<feature type="mutagenesis site" description="Abolishes binding to UBE2I and SUMO E3 ligase activity." evidence="12">
    <original>L</original>
    <variation>A</variation>
    <location>
        <position position="2651"/>
    </location>
</feature>
<feature type="mutagenesis site" description="No effect on SUMO E3 ligase activity." evidence="12">
    <original>K</original>
    <variation>A</variation>
    <location>
        <position position="2652"/>
    </location>
</feature>
<feature type="mutagenesis site" description="Abolishes binding to UBE2I and SUMO E3 ligase activity." evidence="12">
    <original>L</original>
    <variation>A</variation>
    <location>
        <position position="2653"/>
    </location>
</feature>
<feature type="mutagenesis site" description="Impairs SUMO E3 ligase activity." evidence="12">
    <original>P</original>
    <variation>A</variation>
    <location>
        <position position="2654"/>
    </location>
</feature>
<feature type="mutagenesis site" description="No effect on SUMO E3 ligase activity." evidence="12">
    <original>P</original>
    <variation>A</variation>
    <location>
        <position position="2655"/>
    </location>
</feature>
<feature type="mutagenesis site" description="Impairs SUMO E3 ligase activity." evidence="12">
    <original>T</original>
    <variation>A</variation>
    <location>
        <position position="2656"/>
    </location>
</feature>
<feature type="mutagenesis site" description="Abolishes binding to UBE2I and SUMO E3 ligase activity." evidence="12">
    <original>F</original>
    <variation>A</variation>
    <location>
        <position position="2657"/>
    </location>
</feature>
<feature type="mutagenesis site" description="Abolishes binding to UBE2I and SUMO E3 ligase activity." evidence="12">
    <original>F</original>
    <variation>A</variation>
    <location>
        <position position="2658"/>
    </location>
</feature>
<feature type="mutagenesis site" description="Impairs SUMO E3 ligase activity." evidence="12">
    <original>C</original>
    <variation>S</variation>
    <variation>A</variation>
    <location>
        <position position="2659"/>
    </location>
</feature>
<feature type="mutagenesis site" description="Impairs SUMO E3 ligase activity." evidence="12">
    <original>D</original>
    <variation>A</variation>
    <location>
        <position position="2676"/>
    </location>
</feature>
<feature type="mutagenesis site" description="Impairs SUMO E3 ligase activity." evidence="12">
    <original>F</original>
    <variation>A</variation>
    <location>
        <position position="2677"/>
    </location>
</feature>
<feature type="mutagenesis site" description="Impairs SUMO E3 ligase activity." evidence="12">
    <original>Y</original>
    <variation>A</variation>
    <location>
        <position position="2689"/>
    </location>
</feature>
<feature type="sequence conflict" description="In Ref. 1; AAC41758." evidence="33" ref="1">
    <original>H</original>
    <variation>R</variation>
    <location>
        <position position="777"/>
    </location>
</feature>
<feature type="sequence conflict" description="In Ref. 5; AAA85838." evidence="33" ref="5">
    <original>S</original>
    <variation>A</variation>
    <location>
        <position position="2207"/>
    </location>
</feature>
<feature type="sequence conflict" description="In Ref. 5; AAA85838." evidence="33" ref="5">
    <original>T</original>
    <variation>P</variation>
    <location>
        <position position="2210"/>
    </location>
</feature>
<feature type="sequence conflict" description="In Ref. 5; AAA85838." evidence="33" ref="5">
    <original>E</original>
    <variation>V</variation>
    <location>
        <position position="2216"/>
    </location>
</feature>
<feature type="sequence conflict" description="In Ref. 5; AAA85838." evidence="33" ref="5">
    <original>F</original>
    <variation>C</variation>
    <location>
        <position position="2436"/>
    </location>
</feature>
<feature type="sequence conflict" description="In Ref. 5; AAA85838." evidence="33" ref="5">
    <original>T</original>
    <variation>P</variation>
    <location>
        <position position="2475"/>
    </location>
</feature>
<feature type="sequence conflict" description="In Ref. 5; AAA85838." evidence="33" ref="5">
    <original>K</original>
    <variation>N</variation>
    <location>
        <position position="2531"/>
    </location>
</feature>
<feature type="sequence conflict" description="In Ref. 5." evidence="33" ref="5">
    <original>F</original>
    <variation>C</variation>
    <location>
        <position position="2545"/>
    </location>
</feature>
<feature type="helix" evidence="51">
    <location>
        <begin position="5"/>
        <end position="18"/>
    </location>
</feature>
<feature type="helix" evidence="51">
    <location>
        <begin position="22"/>
        <end position="26"/>
    </location>
</feature>
<feature type="helix" evidence="51">
    <location>
        <begin position="29"/>
        <end position="38"/>
    </location>
</feature>
<feature type="helix" evidence="51">
    <location>
        <begin position="42"/>
        <end position="55"/>
    </location>
</feature>
<feature type="helix" evidence="51">
    <location>
        <begin position="60"/>
        <end position="72"/>
    </location>
</feature>
<feature type="helix" evidence="51">
    <location>
        <begin position="76"/>
        <end position="89"/>
    </location>
</feature>
<feature type="helix" evidence="51">
    <location>
        <begin position="94"/>
        <end position="107"/>
    </location>
</feature>
<feature type="helix" evidence="51">
    <location>
        <begin position="112"/>
        <end position="124"/>
    </location>
</feature>
<feature type="helix" evidence="51">
    <location>
        <begin position="129"/>
        <end position="141"/>
    </location>
</feature>
<feature type="helix" evidence="55">
    <location>
        <begin position="805"/>
        <end position="831"/>
    </location>
</feature>
<feature type="strand" evidence="62">
    <location>
        <begin position="1191"/>
        <end position="1205"/>
    </location>
</feature>
<feature type="turn" evidence="62">
    <location>
        <begin position="1206"/>
        <end position="1209"/>
    </location>
</feature>
<feature type="strand" evidence="62">
    <location>
        <begin position="1210"/>
        <end position="1224"/>
    </location>
</feature>
<feature type="turn" evidence="62">
    <location>
        <begin position="1225"/>
        <end position="1227"/>
    </location>
</feature>
<feature type="strand" evidence="62">
    <location>
        <begin position="1230"/>
        <end position="1235"/>
    </location>
</feature>
<feature type="turn" evidence="62">
    <location>
        <begin position="1237"/>
        <end position="1239"/>
    </location>
</feature>
<feature type="strand" evidence="62">
    <location>
        <begin position="1242"/>
        <end position="1247"/>
    </location>
</feature>
<feature type="strand" evidence="62">
    <location>
        <begin position="1255"/>
        <end position="1257"/>
    </location>
</feature>
<feature type="strand" evidence="62">
    <location>
        <begin position="1261"/>
        <end position="1270"/>
    </location>
</feature>
<feature type="strand" evidence="62">
    <location>
        <begin position="1277"/>
        <end position="1284"/>
    </location>
</feature>
<feature type="helix" evidence="62">
    <location>
        <begin position="1288"/>
        <end position="1302"/>
    </location>
</feature>
<feature type="turn" evidence="56">
    <location>
        <begin position="1422"/>
        <end position="1424"/>
    </location>
</feature>
<feature type="turn" evidence="56">
    <location>
        <begin position="1436"/>
        <end position="1438"/>
    </location>
</feature>
<feature type="helix" evidence="57">
    <location>
        <begin position="1472"/>
        <end position="1475"/>
    </location>
</feature>
<feature type="turn" evidence="57">
    <location>
        <begin position="1486"/>
        <end position="1488"/>
    </location>
</feature>
<feature type="turn" evidence="57">
    <location>
        <begin position="1500"/>
        <end position="1502"/>
    </location>
</feature>
<feature type="turn" evidence="58">
    <location>
        <begin position="1550"/>
        <end position="1552"/>
    </location>
</feature>
<feature type="turn" evidence="58">
    <location>
        <begin position="1564"/>
        <end position="1566"/>
    </location>
</feature>
<feature type="turn" evidence="59">
    <location>
        <begin position="1659"/>
        <end position="1662"/>
    </location>
</feature>
<feature type="turn" evidence="59">
    <location>
        <begin position="1672"/>
        <end position="1674"/>
    </location>
</feature>
<feature type="turn" evidence="59">
    <location>
        <begin position="1686"/>
        <end position="1688"/>
    </location>
</feature>
<feature type="turn" evidence="60">
    <location>
        <begin position="1718"/>
        <end position="1721"/>
    </location>
</feature>
<feature type="turn" evidence="60">
    <location>
        <begin position="1731"/>
        <end position="1733"/>
    </location>
</feature>
<feature type="turn" evidence="60">
    <location>
        <begin position="1745"/>
        <end position="1747"/>
    </location>
</feature>
<feature type="turn" evidence="61">
    <location>
        <begin position="1788"/>
        <end position="1790"/>
    </location>
</feature>
<feature type="turn" evidence="61">
    <location>
        <begin position="1802"/>
        <end position="1804"/>
    </location>
</feature>
<feature type="strand" evidence="47">
    <location>
        <begin position="2028"/>
        <end position="2030"/>
    </location>
</feature>
<feature type="strand" evidence="63">
    <location>
        <begin position="2032"/>
        <end position="2046"/>
    </location>
</feature>
<feature type="turn" evidence="63">
    <location>
        <begin position="2047"/>
        <end position="2050"/>
    </location>
</feature>
<feature type="strand" evidence="63">
    <location>
        <begin position="2051"/>
        <end position="2065"/>
    </location>
</feature>
<feature type="turn" evidence="63">
    <location>
        <begin position="2066"/>
        <end position="2068"/>
    </location>
</feature>
<feature type="strand" evidence="63">
    <location>
        <begin position="2071"/>
        <end position="2076"/>
    </location>
</feature>
<feature type="turn" evidence="63">
    <location>
        <begin position="2078"/>
        <end position="2080"/>
    </location>
</feature>
<feature type="strand" evidence="63">
    <location>
        <begin position="2083"/>
        <end position="2088"/>
    </location>
</feature>
<feature type="strand" evidence="47">
    <location>
        <begin position="2095"/>
        <end position="2097"/>
    </location>
</feature>
<feature type="strand" evidence="63">
    <location>
        <begin position="2102"/>
        <end position="2111"/>
    </location>
</feature>
<feature type="strand" evidence="47">
    <location>
        <begin position="2113"/>
        <end position="2115"/>
    </location>
</feature>
<feature type="strand" evidence="63">
    <location>
        <begin position="2118"/>
        <end position="2125"/>
    </location>
</feature>
<feature type="helix" evidence="63">
    <location>
        <begin position="2129"/>
        <end position="2147"/>
    </location>
</feature>
<feature type="strand" evidence="64">
    <location>
        <begin position="2329"/>
        <end position="2343"/>
    </location>
</feature>
<feature type="turn" evidence="64">
    <location>
        <begin position="2344"/>
        <end position="2347"/>
    </location>
</feature>
<feature type="strand" evidence="64">
    <location>
        <begin position="2348"/>
        <end position="2362"/>
    </location>
</feature>
<feature type="turn" evidence="64">
    <location>
        <begin position="2363"/>
        <end position="2365"/>
    </location>
</feature>
<feature type="strand" evidence="64">
    <location>
        <begin position="2368"/>
        <end position="2373"/>
    </location>
</feature>
<feature type="turn" evidence="64">
    <location>
        <begin position="2375"/>
        <end position="2377"/>
    </location>
</feature>
<feature type="strand" evidence="64">
    <location>
        <begin position="2380"/>
        <end position="2385"/>
    </location>
</feature>
<feature type="strand" evidence="64">
    <location>
        <begin position="2399"/>
        <end position="2408"/>
    </location>
</feature>
<feature type="strand" evidence="64">
    <location>
        <begin position="2415"/>
        <end position="2422"/>
    </location>
</feature>
<feature type="helix" evidence="64">
    <location>
        <begin position="2426"/>
        <end position="2442"/>
    </location>
</feature>
<feature type="strand" evidence="50">
    <location>
        <begin position="2632"/>
        <end position="2637"/>
    </location>
</feature>
<feature type="helix" evidence="50">
    <location>
        <begin position="2642"/>
        <end position="2650"/>
    </location>
</feature>
<feature type="helix" evidence="50">
    <location>
        <begin position="2657"/>
        <end position="2661"/>
    </location>
</feature>
<feature type="strand" evidence="49">
    <location>
        <begin position="2663"/>
        <end position="2665"/>
    </location>
</feature>
<feature type="helix" evidence="50">
    <location>
        <begin position="2677"/>
        <end position="2682"/>
    </location>
</feature>
<feature type="turn" evidence="50">
    <location>
        <begin position="2683"/>
        <end position="2686"/>
    </location>
</feature>
<feature type="strand" evidence="48">
    <location>
        <begin position="2710"/>
        <end position="2712"/>
    </location>
</feature>
<feature type="turn" evidence="53">
    <location>
        <begin position="2926"/>
        <end position="2929"/>
    </location>
</feature>
<feature type="strand" evidence="65">
    <location>
        <begin position="2930"/>
        <end position="2944"/>
    </location>
</feature>
<feature type="turn" evidence="65">
    <location>
        <begin position="2945"/>
        <end position="2948"/>
    </location>
</feature>
<feature type="strand" evidence="65">
    <location>
        <begin position="2949"/>
        <end position="2963"/>
    </location>
</feature>
<feature type="turn" evidence="65">
    <location>
        <begin position="2964"/>
        <end position="2966"/>
    </location>
</feature>
<feature type="strand" evidence="65">
    <location>
        <begin position="2969"/>
        <end position="2975"/>
    </location>
</feature>
<feature type="turn" evidence="65">
    <location>
        <begin position="2976"/>
        <end position="2978"/>
    </location>
</feature>
<feature type="strand" evidence="65">
    <location>
        <begin position="2981"/>
        <end position="2986"/>
    </location>
</feature>
<feature type="strand" evidence="53">
    <location>
        <begin position="2994"/>
        <end position="2996"/>
    </location>
</feature>
<feature type="strand" evidence="65">
    <location>
        <begin position="2999"/>
        <end position="3009"/>
    </location>
</feature>
<feature type="strand" evidence="65">
    <location>
        <begin position="3016"/>
        <end position="3026"/>
    </location>
</feature>
<feature type="helix" evidence="65">
    <location>
        <begin position="3027"/>
        <end position="3042"/>
    </location>
</feature>
<feature type="strand" evidence="52">
    <location>
        <begin position="3065"/>
        <end position="3072"/>
    </location>
</feature>
<feature type="strand" evidence="52">
    <location>
        <begin position="3075"/>
        <end position="3084"/>
    </location>
</feature>
<feature type="turn" evidence="52">
    <location>
        <begin position="3086"/>
        <end position="3088"/>
    </location>
</feature>
<feature type="helix" evidence="52">
    <location>
        <begin position="3090"/>
        <end position="3101"/>
    </location>
</feature>
<feature type="turn" evidence="52">
    <location>
        <begin position="3102"/>
        <end position="3104"/>
    </location>
</feature>
<feature type="strand" evidence="52">
    <location>
        <begin position="3112"/>
        <end position="3117"/>
    </location>
</feature>
<feature type="turn" evidence="52">
    <location>
        <begin position="3118"/>
        <end position="3120"/>
    </location>
</feature>
<feature type="strand" evidence="52">
    <location>
        <begin position="3121"/>
        <end position="3124"/>
    </location>
</feature>
<feature type="turn" evidence="52">
    <location>
        <begin position="3127"/>
        <end position="3129"/>
    </location>
</feature>
<feature type="strand" evidence="52">
    <location>
        <begin position="3130"/>
        <end position="3133"/>
    </location>
</feature>
<feature type="strand" evidence="52">
    <location>
        <begin position="3157"/>
        <end position="3160"/>
    </location>
</feature>
<feature type="strand" evidence="54">
    <location>
        <begin position="3168"/>
        <end position="3170"/>
    </location>
</feature>
<feature type="strand" evidence="52">
    <location>
        <begin position="3172"/>
        <end position="3177"/>
    </location>
</feature>
<feature type="helix" evidence="52">
    <location>
        <begin position="3180"/>
        <end position="3182"/>
    </location>
</feature>
<feature type="turn" evidence="52">
    <location>
        <begin position="3183"/>
        <end position="3185"/>
    </location>
</feature>
<feature type="strand" evidence="52">
    <location>
        <begin position="3188"/>
        <end position="3194"/>
    </location>
</feature>
<feature type="helix" evidence="52">
    <location>
        <begin position="3196"/>
        <end position="3203"/>
    </location>
</feature>
<feature type="strand" evidence="52">
    <location>
        <begin position="3216"/>
        <end position="3223"/>
    </location>
</feature>
<protein>
    <recommendedName>
        <fullName>E3 SUMO-protein ligase RanBP2</fullName>
        <ecNumber evidence="8 10 12 16 23">2.3.2.-</ecNumber>
    </recommendedName>
    <alternativeName>
        <fullName>358 kDa nucleoporin</fullName>
    </alternativeName>
    <alternativeName>
        <fullName>Nuclear pore complex protein Nup358</fullName>
    </alternativeName>
    <alternativeName>
        <fullName>Nucleoporin Nup358</fullName>
    </alternativeName>
    <alternativeName>
        <fullName>Ran-binding protein 2</fullName>
        <shortName>RanBP2</shortName>
    </alternativeName>
    <alternativeName>
        <fullName>p270</fullName>
    </alternativeName>
</protein>
<keyword id="KW-0002">3D-structure</keyword>
<keyword id="KW-0007">Acetylation</keyword>
<keyword id="KW-0160">Chromosomal rearrangement</keyword>
<keyword id="KW-1015">Disulfide bond</keyword>
<keyword id="KW-1017">Isopeptide bond</keyword>
<keyword id="KW-0472">Membrane</keyword>
<keyword id="KW-0479">Metal-binding</keyword>
<keyword id="KW-0488">Methylation</keyword>
<keyword id="KW-0509">mRNA transport</keyword>
<keyword id="KW-0906">Nuclear pore complex</keyword>
<keyword id="KW-0539">Nucleus</keyword>
<keyword id="KW-0597">Phosphoprotein</keyword>
<keyword id="KW-0653">Protein transport</keyword>
<keyword id="KW-1267">Proteomics identification</keyword>
<keyword id="KW-1185">Reference proteome</keyword>
<keyword id="KW-0677">Repeat</keyword>
<keyword id="KW-0694">RNA-binding</keyword>
<keyword id="KW-0802">TPR repeat</keyword>
<keyword id="KW-0808">Transferase</keyword>
<keyword id="KW-0811">Translocation</keyword>
<keyword id="KW-0813">Transport</keyword>
<keyword id="KW-0832">Ubl conjugation</keyword>
<keyword id="KW-0833">Ubl conjugation pathway</keyword>
<keyword id="KW-0862">Zinc</keyword>
<keyword id="KW-0863">Zinc-finger</keyword>
<gene>
    <name type="primary">RANBP2</name>
    <name type="synonym">NUP358</name>
</gene>
<accession>P49792</accession>
<accession>Q13074</accession>
<accession>Q15280</accession>
<accession>Q53TE2</accession>
<accession>Q59FH7</accession>
<sequence length="3224" mass="358199">MRRSKADVERYIASVQGSTPSPRQKSMKGFYFAKLYYEAKEYDLAKKYICTYINVQERDPKAHRFLGLLYELEENTDKAVECYRRSVELNPTQKDLVLKIAELLCKNDVTDGRAKYWLERAAKLFPGSPAIYKLKEQLLDCEGEDGWNKLFDLIQSELYVRPDDVHVNIRLVEVYRSTKRLKDAVAHCHEAERNIALRSSLEWNSCVVQTLKEYLESLQCLESDKSDWRATNTDLLLAYANLMLLTLSTRDVQESRELLQSFDSALQSVKSLGGNDELSATFLEMKGHFYMHAGSLLLKMGQHSSNVQWRALSELAALCYLIAFQVPRPKIKLIKGEAGQNLLEMMACDRLSQSGHMLLNLSRGKQDFLKEIVETFANKSGQSALYDALFSSQSPKDTSFLGSDDIGNIDVREPELEDLTRYDVGAIRAHNGSLQHLTWLGLQWNSLPALPGIRKWLKQLFHHLPHETSRLETNAPESICILDLEVFLLGVVYTSHLQLKEKCNSHHSSYQPLCLPLPVCKQLCTERQKSWWDAVCTLIHRKAVPGNVAKLRLLVQHEINTLRAQEKHGLQPALLVHWAECLQKTGSGLNSFYDQREYIGRSVHYWKKVLPLLKIIKKKNSIPEPIDPLFKHFHSVDIQASEIVEYEEDAHITFAILDAVNGNIEDAVTAFESIKSVVSYWNLALIFHRKAEDIENDALSPEEQEECKNYLRKTRDYLIKIIDDSDSNLSVVKKLPVPLESVKEMLNSVMQELEDYSEGGPLYKNGSLRNADSEIKHSTPSPTRYSLSPSKSYKYSPKTPPRWAEDQNSLLKMICQQVEAIKKEMQELKLNSSNSASPHRWPTENYGPDSVPDGYQGSQTFHGAPLTVATTGPSVYYSQSPAYNSQYLLRPAANVTPTKGPVYGMNRLPPQQHIYAYPQQMHTPPVQSSSACMFSQEMYGPPALRFESPATGILSPRGDDYFNYNVQQTSTNPPLPEPGYFTKPPIAAHASRSAESKTIEFGKTNFVQPMPGEGLRPSLPTQAHTTQPTPFKFNSNFKSNDGDFTFSSPQVVTQPPPAAYSNSESLLGLLTSDKPLQGDGYSGAKPIPGGQTIGPRNTFNFGSKNVSGISFTENMGSSQQKNSGFRRSDDMFTFHGPGKSVFGTPTLETANKNHETDGGSAHGDDDDDGPHFEPVVPLPDKIEVKTGEEDEEEFFCNRAKLFRFDVESKEWKERGIGNVKILRHKTSGKIRLLMRREQVLKICANHYISPDMKLTPNAGSDRSFVWHALDYADELPKPEQLAIRFKTPEEAALFKCKFEEAQSILKAPGTNVAMASNQAVRIVKEPTSHDNKDICKSDAGNLNFEFQVAKKEGSWWHCNSCSLKNASTAKKCVSCQNLNPSNKELVGPPLAETVFTPKTSPENVQDRFALVTPKKEGHWDCSICLVRNEPTVSRCIACQNTKSANKSGSSFVHQASFKFGQGDLPKPINSDFRSVFSTKEGQWDCSACLVQNEGSSTKCAACQNPRKQSLPATSIPTPASFKFGTSETSKTLKSGFEDMFAKKEGQWDCSSCLVRNEANATRCVACQNPDKPSPSTSVPAPASFKFGTSETSKAPKSGFEGMFTKKEGQWDCSVCLVRNEASATKCIACQNPGKQNQTTSAVSTPASSETSKAPKSGFEGMFTKKEGQWDCSVCLVRNEASATKCIACQNPGKQNQTTSAVSTPASSETSKAPKSGFEGMFTKKEGQWDCSVCLVRNEASATKCIACQCPSKQNQTTAISTPASSEISKAPKSGFEGMFIRKGQWDCSVCCVQNESSSLKCVACDASKPTHKPIAEAPSAFTLGSEMKLHDSSGSQVGTGFKSNFSEKASKFGNTEQGFKFGHVDQENSPSFMFQGSSNTEFKSTKEGFSIPVSADGFKFGISEPGNQEKKSEKPLENGTGFQAQDISGQKNGRGVIFGQTSSTFTFADLAKSTSGEGFQFGKKDPNFKGFSGAGEKLFSSQYGKMANKANTSGDFEKDDDAYKTEDSDDIHFEPVVQMPEKVELVTGEEDEKVLYSQRVKLFRFDAEVSQWKERGLGNLKILKNEVNGKLRMLMRREQVLKVCANHWITTTMNLKPLSGSDRAWMWLASDFSDGDAKLEQLAAKFKTPELAEEFKQKFEECQRLLLDIPLQTPHKLVDTGRAAKLIQRAEEMKSGLKDFKTFLTNDQTKVTEEENKGSGTGAAGASDTTIKPNPENTGPTLEWDNYDLREDALDDSVSSSSVHASPLASSPVRKNLFRFGESTTGFNFSFKSALSPSKSPAKLNQSGTSVGTDEESDVTQEEERDGQYFEPVVPLPDLVEVSSGEENEQVVFSHRAKLYRYDKDVGQWKERGIGDIKILQNYDNKQVRIVMRRDQVLKLCANHRITPDMTLQNMKGTERVWLWTACDFADGERKVEHLAVRFKLQDVADSFKKIFDEAKTAQEKDSLITPHVSRSSTPRESPCGKIAVAVLEETTRERTDVIQGDDVADATSEVEVSSTSETTPKAVVSPPKFVFGSESVKSIFSSEKSKPFAFGNSSATGSLFGFSFNAPLKSNNSETSSVAQSGSESKVEPKKCELSKNSDIEQSSDSKVKNLFASFPTEESSINYTFKTPEKAKEKKKPEDSPSDDDVLIVYELTPTAEQKALATKLKLPPTFFCYKNRPDYVSEEEEDDEDFETAVKKLNGKLYLDGSEKCRPLEENTADNEKECIIVWEKKPTVEEKAKADTLKLPPTFFCGVCSDTDEDNGNGEDFQSELQKVQEAQKSQTEEITSTTDSVYTGGTEVMVPSFCKSEEPDSITKSISSPSVSSETMDKPVDLSTRKEIDTDSTSQGESKIVSFGFGSSTGLSFADLASSNSGDFAFGSKDKNFQWANTGAAVFGTQSVGTQSAGKVGEDEDGSDEEVVHNEDIHFEPIVSLPEVEVKSGEEDEEILFKERAKLYRWDRDVSQWKERGVGDIKILWHTMKNYYRILMRRDQVFKVCANHVITKTMELKPLNVSNNALVWTASDYADGEAKVEQLAVRFKTKEVADCFKKTFEECQQNLMKLQKGHVSLAAELSKETNPVVFFDVCADGEPLGRITMELFSNIVPRTAENFRALCTGEKGFGFKNSIFHRVIPDFVCQGGDITKHDGTGGQSIYGDKFEDENFDVKHTGPGLLSMANQGQNTNNSQFVITLKKAEHLDFKHVVFGFVKDGMDTVKKIESFGSPKGSVCRRITITECGQI</sequence>
<evidence type="ECO:0000250" key="1">
    <source>
        <dbReference type="UniProtKB" id="Q9ERU9"/>
    </source>
</evidence>
<evidence type="ECO:0000255" key="2">
    <source>
        <dbReference type="PROSITE-ProRule" id="PRU00156"/>
    </source>
</evidence>
<evidence type="ECO:0000255" key="3">
    <source>
        <dbReference type="PROSITE-ProRule" id="PRU00164"/>
    </source>
</evidence>
<evidence type="ECO:0000255" key="4">
    <source>
        <dbReference type="PROSITE-ProRule" id="PRU00322"/>
    </source>
</evidence>
<evidence type="ECO:0000255" key="5">
    <source>
        <dbReference type="PROSITE-ProRule" id="PRU00339"/>
    </source>
</evidence>
<evidence type="ECO:0000256" key="6">
    <source>
        <dbReference type="SAM" id="MobiDB-lite"/>
    </source>
</evidence>
<evidence type="ECO:0000269" key="7">
    <source>
    </source>
</evidence>
<evidence type="ECO:0000269" key="8">
    <source>
    </source>
</evidence>
<evidence type="ECO:0000269" key="9">
    <source>
    </source>
</evidence>
<evidence type="ECO:0000269" key="10">
    <source>
    </source>
</evidence>
<evidence type="ECO:0000269" key="11">
    <source>
    </source>
</evidence>
<evidence type="ECO:0000269" key="12">
    <source>
    </source>
</evidence>
<evidence type="ECO:0000269" key="13">
    <source>
    </source>
</evidence>
<evidence type="ECO:0000269" key="14">
    <source>
    </source>
</evidence>
<evidence type="ECO:0000269" key="15">
    <source>
    </source>
</evidence>
<evidence type="ECO:0000269" key="16">
    <source>
    </source>
</evidence>
<evidence type="ECO:0000269" key="17">
    <source>
    </source>
</evidence>
<evidence type="ECO:0000269" key="18">
    <source>
    </source>
</evidence>
<evidence type="ECO:0000269" key="19">
    <source>
    </source>
</evidence>
<evidence type="ECO:0000269" key="20">
    <source>
    </source>
</evidence>
<evidence type="ECO:0000269" key="21">
    <source>
    </source>
</evidence>
<evidence type="ECO:0000269" key="22">
    <source>
    </source>
</evidence>
<evidence type="ECO:0000269" key="23">
    <source>
    </source>
</evidence>
<evidence type="ECO:0000269" key="24">
    <source>
    </source>
</evidence>
<evidence type="ECO:0000269" key="25">
    <source>
    </source>
</evidence>
<evidence type="ECO:0000269" key="26">
    <source>
    </source>
</evidence>
<evidence type="ECO:0000269" key="27">
    <source>
    </source>
</evidence>
<evidence type="ECO:0000269" key="28">
    <source>
    </source>
</evidence>
<evidence type="ECO:0000269" key="29">
    <source>
    </source>
</evidence>
<evidence type="ECO:0000269" key="30">
    <source>
    </source>
</evidence>
<evidence type="ECO:0000269" key="31">
    <source>
    </source>
</evidence>
<evidence type="ECO:0000303" key="32">
    <source>
    </source>
</evidence>
<evidence type="ECO:0000305" key="33"/>
<evidence type="ECO:0007744" key="34">
    <source>
    </source>
</evidence>
<evidence type="ECO:0007744" key="35">
    <source>
    </source>
</evidence>
<evidence type="ECO:0007744" key="36">
    <source>
    </source>
</evidence>
<evidence type="ECO:0007744" key="37">
    <source>
    </source>
</evidence>
<evidence type="ECO:0007744" key="38">
    <source>
    </source>
</evidence>
<evidence type="ECO:0007744" key="39">
    <source>
    </source>
</evidence>
<evidence type="ECO:0007744" key="40">
    <source>
    </source>
</evidence>
<evidence type="ECO:0007744" key="41">
    <source>
    </source>
</evidence>
<evidence type="ECO:0007744" key="42">
    <source>
    </source>
</evidence>
<evidence type="ECO:0007744" key="43">
    <source>
    </source>
</evidence>
<evidence type="ECO:0007744" key="44">
    <source>
    </source>
</evidence>
<evidence type="ECO:0007744" key="45">
    <source>
    </source>
</evidence>
<evidence type="ECO:0007744" key="46">
    <source>
    </source>
</evidence>
<evidence type="ECO:0007829" key="47">
    <source>
        <dbReference type="PDB" id="1XKE"/>
    </source>
</evidence>
<evidence type="ECO:0007829" key="48">
    <source>
        <dbReference type="PDB" id="2LAS"/>
    </source>
</evidence>
<evidence type="ECO:0007829" key="49">
    <source>
        <dbReference type="PDB" id="3UIN"/>
    </source>
</evidence>
<evidence type="ECO:0007829" key="50">
    <source>
        <dbReference type="PDB" id="3UIP"/>
    </source>
</evidence>
<evidence type="ECO:0007829" key="51">
    <source>
        <dbReference type="PDB" id="4GA0"/>
    </source>
</evidence>
<evidence type="ECO:0007829" key="52">
    <source>
        <dbReference type="PDB" id="4I9Y"/>
    </source>
</evidence>
<evidence type="ECO:0007829" key="53">
    <source>
        <dbReference type="PDB" id="4L6E"/>
    </source>
</evidence>
<evidence type="ECO:0007829" key="54">
    <source>
        <dbReference type="PDB" id="4LQW"/>
    </source>
</evidence>
<evidence type="ECO:0007829" key="55">
    <source>
        <dbReference type="PDB" id="7MNK"/>
    </source>
</evidence>
<evidence type="ECO:0007829" key="56">
    <source>
        <dbReference type="PDB" id="7MNP"/>
    </source>
</evidence>
<evidence type="ECO:0007829" key="57">
    <source>
        <dbReference type="PDB" id="7MNR"/>
    </source>
</evidence>
<evidence type="ECO:0007829" key="58">
    <source>
        <dbReference type="PDB" id="7MNS"/>
    </source>
</evidence>
<evidence type="ECO:0007829" key="59">
    <source>
        <dbReference type="PDB" id="7MNT"/>
    </source>
</evidence>
<evidence type="ECO:0007829" key="60">
    <source>
        <dbReference type="PDB" id="7MNU"/>
    </source>
</evidence>
<evidence type="ECO:0007829" key="61">
    <source>
        <dbReference type="PDB" id="7MNV"/>
    </source>
</evidence>
<evidence type="ECO:0007829" key="62">
    <source>
        <dbReference type="PDB" id="7MNW"/>
    </source>
</evidence>
<evidence type="ECO:0007829" key="63">
    <source>
        <dbReference type="PDB" id="7MNX"/>
    </source>
</evidence>
<evidence type="ECO:0007829" key="64">
    <source>
        <dbReference type="PDB" id="7MNY"/>
    </source>
</evidence>
<evidence type="ECO:0007829" key="65">
    <source>
        <dbReference type="PDB" id="7MNZ"/>
    </source>
</evidence>